<reference key="1">
    <citation type="journal article" date="1990" name="J. Biol. Chem.">
        <title>Generation of diversity in nonerythroid spectrins. Multiple polypeptides are predicted by sequence analysis of cDNAs encompassing the coding region of human nonerythroid alpha-spectrin.</title>
        <authorList>
            <person name="Moon R.T."/>
            <person name="McMahon A.P."/>
        </authorList>
    </citation>
    <scope>NUCLEOTIDE SEQUENCE [MRNA] (ISOFORM 1)</scope>
    <scope>VARIANT THR-1300</scope>
</reference>
<reference key="2">
    <citation type="journal article" date="1999" name="Biochemistry">
        <title>Brain and muscle express a unique alternative transcript of alphaII spectrin.</title>
        <authorList>
            <person name="Cianci C.D."/>
            <person name="Zhang Z."/>
            <person name="Pradhan D."/>
            <person name="Morrow J.S."/>
        </authorList>
    </citation>
    <scope>NUCLEOTIDE SEQUENCE [MRNA] (ISOFORM 2)</scope>
    <scope>ALTERNATIVE SPLICING</scope>
    <source>
        <tissue>Fetal brain</tissue>
    </source>
</reference>
<reference key="3">
    <citation type="submission" date="2004-09" db="EMBL/GenBank/DDBJ databases">
        <title>Human full-length cDNA starting with the capped site sequence.</title>
        <authorList>
            <person name="Kato S."/>
        </authorList>
    </citation>
    <scope>NUCLEOTIDE SEQUENCE [MRNA] (ISOFORM 3)</scope>
</reference>
<reference key="4">
    <citation type="submission" date="2005-03" db="EMBL/GenBank/DDBJ databases">
        <authorList>
            <person name="Totoki Y."/>
            <person name="Toyoda A."/>
            <person name="Takeda T."/>
            <person name="Sakaki Y."/>
            <person name="Tanaka A."/>
            <person name="Yokoyama S."/>
            <person name="Ohara O."/>
            <person name="Nagase T."/>
            <person name="Kikuno R.F."/>
        </authorList>
    </citation>
    <scope>NUCLEOTIDE SEQUENCE [LARGE SCALE MRNA] (ISOFORM 1)</scope>
    <source>
        <tissue>Aorta</tissue>
    </source>
</reference>
<reference key="5">
    <citation type="journal article" date="2004" name="Nature">
        <title>DNA sequence and analysis of human chromosome 9.</title>
        <authorList>
            <person name="Humphray S.J."/>
            <person name="Oliver K."/>
            <person name="Hunt A.R."/>
            <person name="Plumb R.W."/>
            <person name="Loveland J.E."/>
            <person name="Howe K.L."/>
            <person name="Andrews T.D."/>
            <person name="Searle S."/>
            <person name="Hunt S.E."/>
            <person name="Scott C.E."/>
            <person name="Jones M.C."/>
            <person name="Ainscough R."/>
            <person name="Almeida J.P."/>
            <person name="Ambrose K.D."/>
            <person name="Ashwell R.I.S."/>
            <person name="Babbage A.K."/>
            <person name="Babbage S."/>
            <person name="Bagguley C.L."/>
            <person name="Bailey J."/>
            <person name="Banerjee R."/>
            <person name="Barker D.J."/>
            <person name="Barlow K.F."/>
            <person name="Bates K."/>
            <person name="Beasley H."/>
            <person name="Beasley O."/>
            <person name="Bird C.P."/>
            <person name="Bray-Allen S."/>
            <person name="Brown A.J."/>
            <person name="Brown J.Y."/>
            <person name="Burford D."/>
            <person name="Burrill W."/>
            <person name="Burton J."/>
            <person name="Carder C."/>
            <person name="Carter N.P."/>
            <person name="Chapman J.C."/>
            <person name="Chen Y."/>
            <person name="Clarke G."/>
            <person name="Clark S.Y."/>
            <person name="Clee C.M."/>
            <person name="Clegg S."/>
            <person name="Collier R.E."/>
            <person name="Corby N."/>
            <person name="Crosier M."/>
            <person name="Cummings A.T."/>
            <person name="Davies J."/>
            <person name="Dhami P."/>
            <person name="Dunn M."/>
            <person name="Dutta I."/>
            <person name="Dyer L.W."/>
            <person name="Earthrowl M.E."/>
            <person name="Faulkner L."/>
            <person name="Fleming C.J."/>
            <person name="Frankish A."/>
            <person name="Frankland J.A."/>
            <person name="French L."/>
            <person name="Fricker D.G."/>
            <person name="Garner P."/>
            <person name="Garnett J."/>
            <person name="Ghori J."/>
            <person name="Gilbert J.G.R."/>
            <person name="Glison C."/>
            <person name="Grafham D.V."/>
            <person name="Gribble S."/>
            <person name="Griffiths C."/>
            <person name="Griffiths-Jones S."/>
            <person name="Grocock R."/>
            <person name="Guy J."/>
            <person name="Hall R.E."/>
            <person name="Hammond S."/>
            <person name="Harley J.L."/>
            <person name="Harrison E.S.I."/>
            <person name="Hart E.A."/>
            <person name="Heath P.D."/>
            <person name="Henderson C.D."/>
            <person name="Hopkins B.L."/>
            <person name="Howard P.J."/>
            <person name="Howden P.J."/>
            <person name="Huckle E."/>
            <person name="Johnson C."/>
            <person name="Johnson D."/>
            <person name="Joy A.A."/>
            <person name="Kay M."/>
            <person name="Keenan S."/>
            <person name="Kershaw J.K."/>
            <person name="Kimberley A.M."/>
            <person name="King A."/>
            <person name="Knights A."/>
            <person name="Laird G.K."/>
            <person name="Langford C."/>
            <person name="Lawlor S."/>
            <person name="Leongamornlert D.A."/>
            <person name="Leversha M."/>
            <person name="Lloyd C."/>
            <person name="Lloyd D.M."/>
            <person name="Lovell J."/>
            <person name="Martin S."/>
            <person name="Mashreghi-Mohammadi M."/>
            <person name="Matthews L."/>
            <person name="McLaren S."/>
            <person name="McLay K.E."/>
            <person name="McMurray A."/>
            <person name="Milne S."/>
            <person name="Nickerson T."/>
            <person name="Nisbett J."/>
            <person name="Nordsiek G."/>
            <person name="Pearce A.V."/>
            <person name="Peck A.I."/>
            <person name="Porter K.M."/>
            <person name="Pandian R."/>
            <person name="Pelan S."/>
            <person name="Phillimore B."/>
            <person name="Povey S."/>
            <person name="Ramsey Y."/>
            <person name="Rand V."/>
            <person name="Scharfe M."/>
            <person name="Sehra H.K."/>
            <person name="Shownkeen R."/>
            <person name="Sims S.K."/>
            <person name="Skuce C.D."/>
            <person name="Smith M."/>
            <person name="Steward C.A."/>
            <person name="Swarbreck D."/>
            <person name="Sycamore N."/>
            <person name="Tester J."/>
            <person name="Thorpe A."/>
            <person name="Tracey A."/>
            <person name="Tromans A."/>
            <person name="Thomas D.W."/>
            <person name="Wall M."/>
            <person name="Wallis J.M."/>
            <person name="West A.P."/>
            <person name="Whitehead S.L."/>
            <person name="Willey D.L."/>
            <person name="Williams S.A."/>
            <person name="Wilming L."/>
            <person name="Wray P.W."/>
            <person name="Young L."/>
            <person name="Ashurst J.L."/>
            <person name="Coulson A."/>
            <person name="Blocker H."/>
            <person name="Durbin R.M."/>
            <person name="Sulston J.E."/>
            <person name="Hubbard T."/>
            <person name="Jackson M.J."/>
            <person name="Bentley D.R."/>
            <person name="Beck S."/>
            <person name="Rogers J."/>
            <person name="Dunham I."/>
        </authorList>
    </citation>
    <scope>NUCLEOTIDE SEQUENCE [LARGE SCALE GENOMIC DNA]</scope>
</reference>
<reference key="6">
    <citation type="journal article" date="2004" name="Genome Res.">
        <title>The status, quality, and expansion of the NIH full-length cDNA project: the Mammalian Gene Collection (MGC).</title>
        <authorList>
            <consortium name="The MGC Project Team"/>
        </authorList>
    </citation>
    <scope>NUCLEOTIDE SEQUENCE [LARGE SCALE MRNA] (ISOFORM 3)</scope>
    <source>
        <tissue>Uterus</tissue>
    </source>
</reference>
<reference key="7">
    <citation type="submission" date="2008-12" db="UniProtKB">
        <authorList>
            <person name="Lubec G."/>
            <person name="Chen W.-Q."/>
            <person name="Sun Y."/>
        </authorList>
    </citation>
    <scope>PROTEIN SEQUENCE OF 157-168; 970-981; 990-1002; 1608-1619; 2138-2155 AND 2455-2467</scope>
    <scope>IDENTIFICATION BY MASS SPECTROMETRY</scope>
    <source>
        <tissue>Fetal brain cortex</tissue>
    </source>
</reference>
<reference key="8">
    <citation type="journal article" date="1987" name="Biochem. Soc. Trans.">
        <title>Structure and evolution of a non-erythroid spectrin, human alpha-fodrin.</title>
        <authorList>
            <person name="McMahon A.P."/>
            <person name="Moon R.T."/>
        </authorList>
    </citation>
    <scope>NUCLEOTIDE SEQUENCE [MRNA] OF 676-1595 (ISOFORM 1)</scope>
    <scope>VARIANT THR-1300</scope>
    <source>
        <tissue>Lung</tissue>
    </source>
</reference>
<reference key="9">
    <citation type="journal article" date="1987" name="Differentiation">
        <title>cDNA cloning, sequencing and chromosome mapping of a non-erythroid spectrin, human alpha-fodrin.</title>
        <authorList>
            <person name="McMahon A.P."/>
            <person name="Giebelhaus D.H."/>
            <person name="Champion J.E."/>
            <person name="Bailes J.A."/>
            <person name="Lacey S."/>
            <person name="Carritt B."/>
            <person name="Henchman S.K."/>
            <person name="Moon R.T."/>
        </authorList>
    </citation>
    <scope>NUCLEOTIDE SEQUENCE [MRNA] OF 676-1595 (ISOFORM 1)</scope>
    <scope>VARIANT THR-1300</scope>
</reference>
<reference key="10">
    <citation type="journal article" date="1987" name="Differentiation">
        <authorList>
            <person name="McMahon A.P."/>
            <person name="Giebelhaus D.H."/>
            <person name="Champion J.E."/>
            <person name="Bailes J.A."/>
            <person name="Lacey S."/>
            <person name="Carritt B."/>
            <person name="Henchman S.K."/>
            <person name="Moon R.T."/>
        </authorList>
    </citation>
    <scope>ERRATUM OF PUBMED:3038643</scope>
</reference>
<reference key="11">
    <citation type="journal article" date="1997" name="Biochemistry">
        <title>Site-directed mutagenesis of alpha II spectrin at codon 1175 modulates its mu-calpain susceptibility.</title>
        <authorList>
            <person name="Stabach P.R."/>
            <person name="Cianci C.D."/>
            <person name="Glantz S.B."/>
            <person name="Zhang Z."/>
            <person name="Morrow J.S."/>
        </authorList>
    </citation>
    <scope>NUCLEOTIDE SEQUENCE [MRNA] OF 811-1529 (ISOFORMS 1/2)</scope>
    <scope>MUTAGENESIS</scope>
</reference>
<reference key="12">
    <citation type="submission" date="1999-05" db="EMBL/GenBank/DDBJ databases">
        <title>Association and linkage analyses of the nonerythroid alpha-spectrin (SPTAN1) gene on chromosome 9q34 with a large Swedish kindred.</title>
        <authorList>
            <person name="Murakami N."/>
            <person name="Speed W.C."/>
            <person name="Seaman M.I."/>
            <person name="Zychowski R.L."/>
            <person name="Wetterberg L."/>
            <person name="Pakstis A.J."/>
            <person name="Kidd J.R."/>
            <person name="Kidd K.K."/>
        </authorList>
    </citation>
    <scope>NUCLEOTIDE SEQUENCE [GENOMIC DNA] OF 1073-1349</scope>
</reference>
<reference key="13">
    <citation type="journal article" date="1995" name="Eur. J. Biochem.">
        <title>Cloning, expression and characterization of two putative calcium-binding sites in human non-erythroid alpha-spectrin.</title>
        <authorList>
            <person name="Lundberg S."/>
            <person name="Bjoerk J."/>
            <person name="Loefvenberg L."/>
            <person name="Backman L."/>
        </authorList>
    </citation>
    <scope>NUCLEOTIDE SEQUENCE [MRNA] OF 2059-2433 (ISOFORMS 1/2/3)</scope>
    <source>
        <tissue>Fetal liver</tissue>
    </source>
</reference>
<reference key="14">
    <citation type="journal article" date="2002" name="Mol. Cell. Biol.">
        <title>Tyrosine phosphorylation regulates alpha II spectrin cleavage by calpain.</title>
        <authorList>
            <person name="Nicolas G."/>
            <person name="Fournier C.M."/>
            <person name="Galand C."/>
            <person name="Malbert-Colas L."/>
            <person name="Bournier O."/>
            <person name="Kroviarski Y."/>
            <person name="Bourgeois M."/>
            <person name="Camonis J.H."/>
            <person name="Dhermy D."/>
            <person name="Grandchamp B."/>
            <person name="Lecomte M.-C."/>
        </authorList>
    </citation>
    <scope>INTERACTION WITH ACP1</scope>
</reference>
<reference key="15">
    <citation type="journal article" date="2004" name="PLoS Biol.">
        <title>Emerin caps the pointed end of actin filaments: evidence for an actin cortical network at the nuclear inner membrane.</title>
        <authorList>
            <person name="Holaska J.M."/>
            <person name="Kowalski A.K."/>
            <person name="Wilson K.L."/>
        </authorList>
    </citation>
    <scope>INTERACTION WITH EMD</scope>
</reference>
<reference key="16">
    <citation type="journal article" date="2006" name="Cell">
        <title>Global, in vivo, and site-specific phosphorylation dynamics in signaling networks.</title>
        <authorList>
            <person name="Olsen J.V."/>
            <person name="Blagoev B."/>
            <person name="Gnad F."/>
            <person name="Macek B."/>
            <person name="Kumar C."/>
            <person name="Mortensen P."/>
            <person name="Mann M."/>
        </authorList>
    </citation>
    <scope>PHOSPHORYLATION [LARGE SCALE ANALYSIS] AT SER-1217</scope>
    <scope>IDENTIFICATION BY MASS SPECTROMETRY [LARGE SCALE ANALYSIS]</scope>
    <source>
        <tissue>Cervix carcinoma</tissue>
    </source>
</reference>
<reference key="17">
    <citation type="journal article" date="2008" name="Exp. Cell Res.">
        <title>Novel interactions of CLN3 protein link Batten disease to dysregulation of fodrin-Na+, K+ ATPase complex.</title>
        <authorList>
            <person name="Uusi-Rauva K."/>
            <person name="Luiro K."/>
            <person name="Tanhuanpaeae K."/>
            <person name="Kopra O."/>
            <person name="Martin-Vasallo P."/>
            <person name="Kyttaelae A."/>
            <person name="Jalanko A."/>
        </authorList>
    </citation>
    <scope>INTERACTION WITH CLN3</scope>
</reference>
<reference key="18">
    <citation type="journal article" date="2008" name="J. Biol. Chem.">
        <title>The spectrin cytoskeleton influences the surface expression and activation of human transient receptor potential channel 4 channels.</title>
        <authorList>
            <person name="Odell A.F."/>
            <person name="Van Helden D.F."/>
            <person name="Scott J.L."/>
        </authorList>
    </citation>
    <scope>INTERACTION WITH TRPC4</scope>
</reference>
<reference key="19">
    <citation type="journal article" date="2008" name="Proc. Natl. Acad. Sci. U.S.A.">
        <title>A quantitative atlas of mitotic phosphorylation.</title>
        <authorList>
            <person name="Dephoure N."/>
            <person name="Zhou C."/>
            <person name="Villen J."/>
            <person name="Beausoleil S.A."/>
            <person name="Bakalarski C.E."/>
            <person name="Elledge S.J."/>
            <person name="Gygi S.P."/>
        </authorList>
    </citation>
    <scope>IDENTIFICATION BY MASS SPECTROMETRY [LARGE SCALE ANALYSIS]</scope>
    <source>
        <tissue>Cervix carcinoma</tissue>
    </source>
</reference>
<reference key="20">
    <citation type="journal article" date="2009" name="Anal. Chem.">
        <title>Lys-N and trypsin cover complementary parts of the phosphoproteome in a refined SCX-based approach.</title>
        <authorList>
            <person name="Gauci S."/>
            <person name="Helbig A.O."/>
            <person name="Slijper M."/>
            <person name="Krijgsveld J."/>
            <person name="Heck A.J."/>
            <person name="Mohammed S."/>
        </authorList>
    </citation>
    <scope>IDENTIFICATION BY MASS SPECTROMETRY [LARGE SCALE ANALYSIS]</scope>
</reference>
<reference key="21">
    <citation type="journal article" date="2009" name="Sci. Signal.">
        <title>Quantitative phosphoproteomic analysis of T cell receptor signaling reveals system-wide modulation of protein-protein interactions.</title>
        <authorList>
            <person name="Mayya V."/>
            <person name="Lundgren D.H."/>
            <person name="Hwang S.-I."/>
            <person name="Rezaul K."/>
            <person name="Wu L."/>
            <person name="Eng J.K."/>
            <person name="Rodionov V."/>
            <person name="Han D.K."/>
        </authorList>
    </citation>
    <scope>PHOSPHORYLATION [LARGE SCALE ANALYSIS] AT SER-1041 AND TYR-1176</scope>
    <scope>IDENTIFICATION BY MASS SPECTROMETRY [LARGE SCALE ANALYSIS]</scope>
    <source>
        <tissue>Leukemic T-cell</tissue>
    </source>
</reference>
<reference key="22">
    <citation type="journal article" date="2009" name="Science">
        <title>Lysine acetylation targets protein complexes and co-regulates major cellular functions.</title>
        <authorList>
            <person name="Choudhary C."/>
            <person name="Kumar C."/>
            <person name="Gnad F."/>
            <person name="Nielsen M.L."/>
            <person name="Rehman M."/>
            <person name="Walther T.C."/>
            <person name="Olsen J.V."/>
            <person name="Mann M."/>
        </authorList>
    </citation>
    <scope>ACETYLATION [LARGE SCALE ANALYSIS] AT LYS-637; LYS-1519; LYS-2052 AND LYS-2421</scope>
    <scope>IDENTIFICATION BY MASS SPECTROMETRY [LARGE SCALE ANALYSIS]</scope>
</reference>
<reference key="23">
    <citation type="journal article" date="2010" name="Sci. Signal.">
        <title>Quantitative phosphoproteomics reveals widespread full phosphorylation site occupancy during mitosis.</title>
        <authorList>
            <person name="Olsen J.V."/>
            <person name="Vermeulen M."/>
            <person name="Santamaria A."/>
            <person name="Kumar C."/>
            <person name="Miller M.L."/>
            <person name="Jensen L.J."/>
            <person name="Gnad F."/>
            <person name="Cox J."/>
            <person name="Jensen T.S."/>
            <person name="Nigg E.A."/>
            <person name="Brunak S."/>
            <person name="Mann M."/>
        </authorList>
    </citation>
    <scope>PHOSPHORYLATION [LARGE SCALE ANALYSIS] AT SER-982; SER-999; SER-1217 AND SER-1647</scope>
    <scope>IDENTIFICATION BY MASS SPECTROMETRY [LARGE SCALE ANALYSIS]</scope>
    <source>
        <tissue>Cervix carcinoma</tissue>
    </source>
</reference>
<reference key="24">
    <citation type="journal article" date="2011" name="BMC Syst. Biol.">
        <title>Initial characterization of the human central proteome.</title>
        <authorList>
            <person name="Burkard T.R."/>
            <person name="Planyavsky M."/>
            <person name="Kaupe I."/>
            <person name="Breitwieser F.P."/>
            <person name="Buerckstuemmer T."/>
            <person name="Bennett K.L."/>
            <person name="Superti-Furga G."/>
            <person name="Colinge J."/>
        </authorList>
    </citation>
    <scope>IDENTIFICATION BY MASS SPECTROMETRY [LARGE SCALE ANALYSIS]</scope>
</reference>
<reference key="25">
    <citation type="journal article" date="2011" name="Sci. Signal.">
        <title>System-wide temporal characterization of the proteome and phosphoproteome of human embryonic stem cell differentiation.</title>
        <authorList>
            <person name="Rigbolt K.T."/>
            <person name="Prokhorova T.A."/>
            <person name="Akimov V."/>
            <person name="Henningsen J."/>
            <person name="Johansen P.T."/>
            <person name="Kratchmarova I."/>
            <person name="Kassem M."/>
            <person name="Mann M."/>
            <person name="Olsen J.V."/>
            <person name="Blagoev B."/>
        </authorList>
    </citation>
    <scope>PHOSPHORYLATION [LARGE SCALE ANALYSIS] AT SER-1217</scope>
    <scope>IDENTIFICATION BY MASS SPECTROMETRY [LARGE SCALE ANALYSIS]</scope>
</reference>
<reference key="26">
    <citation type="journal article" date="2012" name="Proc. Natl. Acad. Sci. U.S.A.">
        <title>N-terminal acetylome analyses and functional insights of the N-terminal acetyltransferase NatB.</title>
        <authorList>
            <person name="Van Damme P."/>
            <person name="Lasa M."/>
            <person name="Polevoda B."/>
            <person name="Gazquez C."/>
            <person name="Elosegui-Artola A."/>
            <person name="Kim D.S."/>
            <person name="De Juan-Pardo E."/>
            <person name="Demeyer K."/>
            <person name="Hole K."/>
            <person name="Larrea E."/>
            <person name="Timmerman E."/>
            <person name="Prieto J."/>
            <person name="Arnesen T."/>
            <person name="Sherman F."/>
            <person name="Gevaert K."/>
            <person name="Aldabe R."/>
        </authorList>
    </citation>
    <scope>ACETYLATION [LARGE SCALE ANALYSIS] AT MET-1</scope>
    <scope>IDENTIFICATION BY MASS SPECTROMETRY [LARGE SCALE ANALYSIS]</scope>
</reference>
<reference key="27">
    <citation type="journal article" date="2013" name="J. Proteome Res.">
        <title>Toward a comprehensive characterization of a human cancer cell phosphoproteome.</title>
        <authorList>
            <person name="Zhou H."/>
            <person name="Di Palma S."/>
            <person name="Preisinger C."/>
            <person name="Peng M."/>
            <person name="Polat A.N."/>
            <person name="Heck A.J."/>
            <person name="Mohammed S."/>
        </authorList>
    </citation>
    <scope>PHOSPHORYLATION [LARGE SCALE ANALYSIS] AT SER-1041; SER-1217 AND SER-1550</scope>
    <scope>IDENTIFICATION BY MASS SPECTROMETRY [LARGE SCALE ANALYSIS]</scope>
    <source>
        <tissue>Cervix carcinoma</tissue>
        <tissue>Erythroleukemia</tissue>
    </source>
</reference>
<reference key="28">
    <citation type="journal article" date="2014" name="J. Proteomics">
        <title>An enzyme assisted RP-RPLC approach for in-depth analysis of human liver phosphoproteome.</title>
        <authorList>
            <person name="Bian Y."/>
            <person name="Song C."/>
            <person name="Cheng K."/>
            <person name="Dong M."/>
            <person name="Wang F."/>
            <person name="Huang J."/>
            <person name="Sun D."/>
            <person name="Wang L."/>
            <person name="Ye M."/>
            <person name="Zou H."/>
        </authorList>
    </citation>
    <scope>PHOSPHORYLATION [LARGE SCALE ANALYSIS] AT SER-1031; SER-1041; SER-1207; SER-1217; SER-1306; SER-1323; SER-1338; SER-1550; SER-1557; SER-1578; SER-1615 AND THR-2020</scope>
    <scope>IDENTIFICATION BY MASS SPECTROMETRY [LARGE SCALE ANALYSIS]</scope>
    <source>
        <tissue>Liver</tissue>
    </source>
</reference>
<reference key="29">
    <citation type="journal article" date="2015" name="Proteomics">
        <title>N-terminome analysis of the human mitochondrial proteome.</title>
        <authorList>
            <person name="Vaca Jacome A.S."/>
            <person name="Rabilloud T."/>
            <person name="Schaeffer-Reiss C."/>
            <person name="Rompais M."/>
            <person name="Ayoub D."/>
            <person name="Lane L."/>
            <person name="Bairoch A."/>
            <person name="Van Dorsselaer A."/>
            <person name="Carapito C."/>
        </authorList>
    </citation>
    <scope>IDENTIFICATION BY MASS SPECTROMETRY [LARGE SCALE ANALYSIS]</scope>
</reference>
<reference key="30">
    <citation type="journal article" date="2006" name="J. Biol. Chem.">
        <title>Structure of the calmodulin alphaII-spectrin complex provides insight into the regulation of cell plasticity.</title>
        <authorList>
            <person name="Simonovic M."/>
            <person name="Zhang Z."/>
            <person name="Cianci C.D."/>
            <person name="Steitz T.A."/>
            <person name="Morrow J.S."/>
        </authorList>
    </citation>
    <scope>X-RAY CRYSTALLOGRAPHY (2.45 ANGSTROMS) OF 1172-1210 IN COMPLEX WITH CALM</scope>
</reference>
<reference evidence="30" key="31">
    <citation type="submission" date="2008-11" db="PDB data bank">
        <title>Crystal structure of the human brain alpha spectrin repeats 15 and 16.</title>
        <authorList>
            <person name="Vorobiev S.M."/>
            <person name="Su M."/>
            <person name="Seetharaman J."/>
            <person name="Shastry R."/>
            <person name="Foote E.L."/>
            <person name="Ciccosanti C."/>
            <person name="Janjua H."/>
            <person name="Xiao R."/>
            <person name="Acton T.B."/>
            <person name="Montelione G.T."/>
            <person name="Tong L."/>
            <person name="Hunt J.F."/>
        </authorList>
    </citation>
    <scope>X-RAY CRYSTALLOGRAPHY (2.30 ANGSTROMS) OF 1337-1544</scope>
</reference>
<reference key="32">
    <citation type="journal article" date="2006" name="Science">
        <title>The consensus coding sequences of human breast and colorectal cancers.</title>
        <authorList>
            <person name="Sjoeblom T."/>
            <person name="Jones S."/>
            <person name="Wood L.D."/>
            <person name="Parsons D.W."/>
            <person name="Lin J."/>
            <person name="Barber T.D."/>
            <person name="Mandelker D."/>
            <person name="Leary R.J."/>
            <person name="Ptak J."/>
            <person name="Silliman N."/>
            <person name="Szabo S."/>
            <person name="Buckhaults P."/>
            <person name="Farrell C."/>
            <person name="Meeh P."/>
            <person name="Markowitz S.D."/>
            <person name="Willis J."/>
            <person name="Dawson D."/>
            <person name="Willson J.K.V."/>
            <person name="Gazdar A.F."/>
            <person name="Hartigan J."/>
            <person name="Wu L."/>
            <person name="Liu C."/>
            <person name="Parmigiani G."/>
            <person name="Park B.H."/>
            <person name="Bachman K.E."/>
            <person name="Papadopoulos N."/>
            <person name="Vogelstein B."/>
            <person name="Kinzler K.W."/>
            <person name="Velculescu V.E."/>
        </authorList>
    </citation>
    <scope>VARIANTS [LARGE SCALE ANALYSIS] CYS-904; SER-1017; TRP-1794 AND ASN-1918</scope>
</reference>
<reference key="33">
    <citation type="journal article" date="2010" name="Am. J. Hum. Genet.">
        <title>Dominant-negative mutations in alpha-II spectrin cause West syndrome with severe cerebral hypomyelination, spastic quadriplegia, and developmental delay.</title>
        <authorList>
            <person name="Saitsu H."/>
            <person name="Tohyama J."/>
            <person name="Kumada T."/>
            <person name="Egawa K."/>
            <person name="Hamada K."/>
            <person name="Okada I."/>
            <person name="Mizuguchi T."/>
            <person name="Osaka H."/>
            <person name="Miyata R."/>
            <person name="Furukawa T."/>
            <person name="Haginoya K."/>
            <person name="Hoshino H."/>
            <person name="Goto T."/>
            <person name="Hachiya Y."/>
            <person name="Yamagata T."/>
            <person name="Saitoh S."/>
            <person name="Nagai T."/>
            <person name="Nishiyama K."/>
            <person name="Nishimura A."/>
            <person name="Miyake N."/>
            <person name="Komada M."/>
            <person name="Hayashi K."/>
            <person name="Hirai S."/>
            <person name="Ogata K."/>
            <person name="Kato M."/>
            <person name="Fukuda A."/>
            <person name="Matsumoto N."/>
        </authorList>
    </citation>
    <scope>VARIANTS DEE5 GLU-2202 DEL AND ARG-MET-2304 INS</scope>
    <scope>CHARACTERIZATION OF VARIANTS DEE5 GLU-2202 DEL AND ARG-MET-2304 INS</scope>
    <scope>INVOLVEMENT IN DEE5</scope>
</reference>
<reference key="34">
    <citation type="journal article" date="2012" name="Epilepsia">
        <title>Early onset West syndrome with severe hypomyelination and coloboma-like optic discs in a girl with SPTAN1 mutation.</title>
        <authorList>
            <person name="Writzl K."/>
            <person name="Primec Z.R."/>
            <person name="Strazisar B.G."/>
            <person name="Osredkar D."/>
            <person name="Pecaric-Meglic N."/>
            <person name="Kranjc B.S."/>
            <person name="Nishiyama K."/>
            <person name="Matsumoto N."/>
            <person name="Saitsu H."/>
        </authorList>
    </citation>
    <scope>VARIANT DEE5 GLU-2202 DEL</scope>
    <scope>INVOLVEMENT IN DEE5</scope>
</reference>
<reference key="35">
    <citation type="journal article" date="2013" name="Brain Dev.">
        <title>Progressive diffuse brain atrophy in West syndrome with marked hypomyelination due to SPTAN1 gene mutation.</title>
        <authorList>
            <person name="Nonoda Y."/>
            <person name="Saito Y."/>
            <person name="Nagai S."/>
            <person name="Sasaki M."/>
            <person name="Iwasaki T."/>
            <person name="Matsumoto N."/>
            <person name="Ishii M."/>
            <person name="Saitsu H."/>
        </authorList>
    </citation>
    <scope>VARIANT DEE5 ASP-GLN-LEU-2300 INS</scope>
    <scope>INVOLVEMENT IN DEE5</scope>
</reference>
<reference key="36">
    <citation type="journal article" date="2017" name="Brain">
        <title>Delineating SPTAN1 associated phenotypes: from isolated epilepsy to encephalopathy with progressive brain atrophy.</title>
        <authorList>
            <person name="Syrbe S."/>
            <person name="Harms F.L."/>
            <person name="Parrini E."/>
            <person name="Montomoli M."/>
            <person name="Muetze U."/>
            <person name="Helbig K.L."/>
            <person name="Polster T."/>
            <person name="Albrecht B."/>
            <person name="Bernbeck U."/>
            <person name="van Binsbergen E."/>
            <person name="Biskup S."/>
            <person name="Burglen L."/>
            <person name="Denecke J."/>
            <person name="Heron B."/>
            <person name="Heyne H.O."/>
            <person name="Hoffmann G.F."/>
            <person name="Hornemann F."/>
            <person name="Matsushige T."/>
            <person name="Matsuura R."/>
            <person name="Kato M."/>
            <person name="Korenke G.C."/>
            <person name="Kuechler A."/>
            <person name="Laemmer C."/>
            <person name="Merkenschlager A."/>
            <person name="Mignot C."/>
            <person name="Ruf S."/>
            <person name="Nakashima M."/>
            <person name="Saitsu H."/>
            <person name="Stamberger H."/>
            <person name="Pisano T."/>
            <person name="Tohyama J."/>
            <person name="Weckhuysen S."/>
            <person name="Werckx W."/>
            <person name="Wickert J."/>
            <person name="Mari F."/>
            <person name="Verbeek N.E."/>
            <person name="Moeller R.S."/>
            <person name="Koeleman B."/>
            <person name="Matsumoto N."/>
            <person name="Dobyns W.B."/>
            <person name="Battaglia D."/>
            <person name="Lemke J.R."/>
            <person name="Kutsche K."/>
            <person name="Guerrini R."/>
        </authorList>
    </citation>
    <scope>VARIANTS DEE5 TRP-1771; TRP-2057; GLU-2202 DEL; ASN-2203 DEL; LYS-2266; ASP-2279 DEL; 2299-GLN--GLY-2301 DEL; ASP-GLN-LEU-2300 INS AND ARG-MET-2304 INS</scope>
    <scope>VARIANT ASP-178</scope>
    <scope>VARIANTS DEVEP VAL-306; ARG-1239; TRP-1605 AND 2298-ASP--LEU-2300 DEL</scope>
    <scope>INVOLVEMENT IN DEVEP</scope>
</reference>
<reference key="37">
    <citation type="journal article" date="2017" name="Hum. Mutat.">
        <title>Diagnostic targeted resequencing in 349 patients with drug-resistant pediatric epilepsies identifies causative mutations in 30 different genes.</title>
        <authorList>
            <consortium name="Clinical Study Group"/>
            <person name="Parrini E."/>
            <person name="Marini C."/>
            <person name="Mei D."/>
            <person name="Galuppi A."/>
            <person name="Cellini E."/>
            <person name="Pucatti D."/>
            <person name="Chiti L."/>
            <person name="Rutigliano D."/>
            <person name="Bianchini C."/>
            <person name="Virdo S."/>
            <person name="De Vita D."/>
            <person name="Bigoni S."/>
            <person name="Barba C."/>
            <person name="Mari F."/>
            <person name="Montomoli M."/>
            <person name="Pisano T."/>
            <person name="Rosati A."/>
            <person name="Guerrini R."/>
        </authorList>
    </citation>
    <scope>VARIANT DEE5 ARG-MET-2304 INS</scope>
</reference>
<reference key="38">
    <citation type="journal article" date="2019" name="Brain">
        <title>Nonsense mutations in alpha-II spectrin in three families with juvenile onset hereditary motor neuropathy.</title>
        <authorList>
            <person name="Beijer D."/>
            <person name="Deconinck T."/>
            <person name="De Bleecker J.L."/>
            <person name="Dotti M.T."/>
            <person name="Malandrini A."/>
            <person name="Urtizberea J.A."/>
            <person name="Zulaica M."/>
            <person name="Lopez de Munain A."/>
            <person name="Asselbergh B."/>
            <person name="De Jonghe P."/>
            <person name="Baets J."/>
        </authorList>
    </citation>
    <scope>VARIANTS HMND11 139-ARG--ASN-2472 DEL; 1539-GLN--ASN-2472 DEL AND 2144-GLN--ASN-2472 DEL</scope>
    <scope>INVOLVEMENT IN HMND11</scope>
    <scope>CHARACTERIZATION OF VARIANTS HMND11 139-ARG--ASN-2472 DEL; 1539-GLN--ASN-2472 DEL AND 2144-GLN--ASN-2472 DEL</scope>
</reference>
<reference key="39">
    <citation type="journal article" date="2021" name="Brain">
        <title>A novel de novo SPTAN1 nonsense variant causes hereditary motor neuropathy in a Chinese family.</title>
        <authorList>
            <person name="Dong H.L."/>
            <person name="Chen L."/>
            <person name="Wu Z.Y."/>
        </authorList>
    </citation>
    <scope>VARIANT HMND11 2256-ARG--ASN-2472 DEL</scope>
    <scope>INVOLVEMENT IN HMND11</scope>
</reference>
<reference key="40">
    <citation type="journal article" date="2022" name="Mov. Disord.">
        <title>De Novo and Dominantly Inherited SPTAN1 Mutations Cause Spastic Paraplegia and Cerebellar Ataxia.</title>
        <authorList>
            <consortium name="PREPARE Consortium"/>
            <person name="Van de Vondel L."/>
            <person name="De Winter J."/>
            <person name="Beijer D."/>
            <person name="Coarelli G."/>
            <person name="Wayand M."/>
            <person name="Palvadeau R."/>
            <person name="Pauly M.G."/>
            <person name="Klein K."/>
            <person name="Rautenberg M."/>
            <person name="Guillot-Noel L."/>
            <person name="Deconinck T."/>
            <person name="Vural A."/>
            <person name="Ertan S."/>
            <person name="Dogu O."/>
            <person name="Uysal H."/>
            <person name="Brankovic V."/>
            <person name="Herzog R."/>
            <person name="Brice A."/>
            <person name="Durr A."/>
            <person name="Klebe S."/>
            <person name="Stock F."/>
            <person name="Bischoff A.T."/>
            <person name="Rattay T.W."/>
            <person name="Sobrido M.J."/>
            <person name="De Michele G."/>
            <person name="De Jonghe P."/>
            <person name="Klopstock T."/>
            <person name="Lohmann K."/>
            <person name="Zanni G."/>
            <person name="Santorelli F.M."/>
            <person name="Timmerman V."/>
            <person name="Haack T.B."/>
            <person name="Zuechner S."/>
            <person name="Schuele R."/>
            <person name="Stevanin G."/>
            <person name="Synofzik M."/>
            <person name="Basak A.N."/>
            <person name="Baets J."/>
        </authorList>
    </citation>
    <scope>VARIANTS SPG91 TRP-19; CYS-1098; CYS-1619 AND LYS-2078 DEL</scope>
    <scope>INVOLVEMENT IN SPG91</scope>
</reference>
<reference key="41">
    <citation type="journal article" date="2023" name="Genet. Med.">
        <title>Expanding SPTAN1 monoallelic variant associated disorders: From epileptic encephalopathy to pure spastic paraplegia and ataxia.</title>
        <authorList>
            <consortium name="Genomics England Research Consortium"/>
            <person name="Morsy H."/>
            <person name="Benkirane M."/>
            <person name="Cali E."/>
            <person name="Rocca C."/>
            <person name="Zhelcheska K."/>
            <person name="Cipriani V."/>
            <person name="Galanaki E."/>
            <person name="Maroofian R."/>
            <person name="Efthymiou S."/>
            <person name="Murphy D."/>
            <person name="O'Driscoll M."/>
            <person name="Suri M."/>
            <person name="Banka S."/>
            <person name="Clayton-Smith J."/>
            <person name="Wright T."/>
            <person name="Redman M."/>
            <person name="Bassetti J.A."/>
            <person name="Nizon M."/>
            <person name="Cogne B."/>
            <person name="Jamra R.A."/>
            <person name="Bartolomaeus T."/>
            <person name="Heruth M."/>
            <person name="Krey I."/>
            <person name="Gburek-Augustat J."/>
            <person name="Wieczorek D."/>
            <person name="Gattermann F."/>
            <person name="Mcentagart M."/>
            <person name="Goldenberg A."/>
            <person name="Guyant-Marechal L."/>
            <person name="Garcia-Moreno H."/>
            <person name="Giunti P."/>
            <person name="Chabrol B."/>
            <person name="Bacrot S."/>
            <person name="Buissonniere R."/>
            <person name="Magry V."/>
            <person name="Gowda V.K."/>
            <person name="Srinivasan V.M."/>
            <person name="Melegh B."/>
            <person name="Szabo A."/>
            <person name="Suemegi K."/>
            <person name="Cossee M."/>
            <person name="Ziff M."/>
            <person name="Butterfield R."/>
            <person name="Hunt D."/>
            <person name="Bird-Lieberman G."/>
            <person name="Hanna M."/>
            <person name="Koenig M."/>
            <person name="Stankewich M."/>
            <person name="Vandrovcova J."/>
            <person name="Houlden H."/>
        </authorList>
    </citation>
    <scope>VARIANTS SPG91 TRP-19; CYS-2119 AND PHE-2443</scope>
    <scope>VARIANTS DEVEP 376-TRP--ASN-2472 DEL; 627-ARG--ASN-2472 DEL; 733-ARG--ASN-2472 DEL; TRP-1464; 1641-GLN--ASN-2472 DEL AND GLN-2199</scope>
    <scope>VARIANTS DEE5 LYS-2078 DEL; GLU-2202 DEL; LYS-2266 AND ASP-GLN-LEU-2300 INS</scope>
    <scope>INVOLVEMENT IN SPG91</scope>
    <scope>INVOLVEMENT IN DEVEP</scope>
    <scope>INVOLVEMENT IN DEE5</scope>
</reference>
<feature type="chain" id="PRO_0000073455" description="Spectrin alpha chain, non-erythrocytic 1">
    <location>
        <begin position="1"/>
        <end position="2472"/>
    </location>
</feature>
<feature type="repeat" description="Spectrin 1" evidence="4">
    <location>
        <begin position="45"/>
        <end position="146"/>
    </location>
</feature>
<feature type="repeat" description="Spectrin 2" evidence="4">
    <location>
        <begin position="150"/>
        <end position="251"/>
    </location>
</feature>
<feature type="repeat" description="Spectrin 3" evidence="4">
    <location>
        <begin position="256"/>
        <end position="358"/>
    </location>
</feature>
<feature type="repeat" description="Spectrin 4" evidence="4">
    <location>
        <begin position="361"/>
        <end position="465"/>
    </location>
</feature>
<feature type="repeat" description="Spectrin 5" evidence="4">
    <location>
        <begin position="468"/>
        <end position="570"/>
    </location>
</feature>
<feature type="repeat" description="Spectrin 6" evidence="4">
    <location>
        <begin position="574"/>
        <end position="676"/>
    </location>
</feature>
<feature type="repeat" description="Spectrin 7" evidence="4">
    <location>
        <begin position="679"/>
        <end position="781"/>
    </location>
</feature>
<feature type="repeat" description="Spectrin 8" evidence="4">
    <location>
        <begin position="785"/>
        <end position="888"/>
    </location>
</feature>
<feature type="repeat" description="Spectrin 9" evidence="4">
    <location>
        <begin position="891"/>
        <end position="969"/>
    </location>
</feature>
<feature type="domain" description="SH3" evidence="5">
    <location>
        <begin position="967"/>
        <end position="1026"/>
    </location>
</feature>
<feature type="repeat" description="Spectrin 10" evidence="4">
    <location>
        <begin position="1096"/>
        <end position="1166"/>
    </location>
</feature>
<feature type="repeat" description="Spectrin 11" evidence="4">
    <location>
        <begin position="1233"/>
        <end position="1336"/>
    </location>
</feature>
<feature type="repeat" description="Spectrin 12" evidence="4 29">
    <location>
        <begin position="1339"/>
        <end position="1442"/>
    </location>
</feature>
<feature type="repeat" description="Spectrin 13" evidence="4 29">
    <location>
        <begin position="1446"/>
        <end position="1549"/>
    </location>
</feature>
<feature type="repeat" description="Spectrin 14" evidence="4">
    <location>
        <begin position="1552"/>
        <end position="1656"/>
    </location>
</feature>
<feature type="repeat" description="Spectrin 15" evidence="4">
    <location>
        <begin position="1659"/>
        <end position="1762"/>
    </location>
</feature>
<feature type="repeat" description="Spectrin 16" evidence="4">
    <location>
        <begin position="1764"/>
        <end position="1868"/>
    </location>
</feature>
<feature type="repeat" description="Spectrin 17" evidence="4">
    <location>
        <begin position="1871"/>
        <end position="1974"/>
    </location>
</feature>
<feature type="repeat" description="Spectrin 18" evidence="4">
    <location>
        <begin position="1978"/>
        <end position="2081"/>
    </location>
</feature>
<feature type="repeat" description="Spectrin 19" evidence="4">
    <location>
        <begin position="2092"/>
        <end position="2194"/>
    </location>
</feature>
<feature type="repeat" description="Spectrin 20" evidence="4">
    <location>
        <begin position="2206"/>
        <end position="2310"/>
    </location>
</feature>
<feature type="domain" description="EF-hand 1" evidence="6">
    <location>
        <begin position="2323"/>
        <end position="2358"/>
    </location>
</feature>
<feature type="domain" description="EF-hand 2" evidence="6">
    <location>
        <begin position="2366"/>
        <end position="2401"/>
    </location>
</feature>
<feature type="domain" description="EF-hand 3" evidence="6">
    <location>
        <begin position="2404"/>
        <end position="2439"/>
    </location>
</feature>
<feature type="binding site" evidence="6">
    <location>
        <position position="2336"/>
    </location>
    <ligand>
        <name>Ca(2+)</name>
        <dbReference type="ChEBI" id="CHEBI:29108"/>
        <label>1</label>
    </ligand>
</feature>
<feature type="binding site" evidence="6">
    <location>
        <position position="2338"/>
    </location>
    <ligand>
        <name>Ca(2+)</name>
        <dbReference type="ChEBI" id="CHEBI:29108"/>
        <label>1</label>
    </ligand>
</feature>
<feature type="binding site" evidence="6">
    <location>
        <position position="2340"/>
    </location>
    <ligand>
        <name>Ca(2+)</name>
        <dbReference type="ChEBI" id="CHEBI:29108"/>
        <label>1</label>
    </ligand>
</feature>
<feature type="binding site" evidence="6">
    <location>
        <position position="2342"/>
    </location>
    <ligand>
        <name>Ca(2+)</name>
        <dbReference type="ChEBI" id="CHEBI:29108"/>
        <label>1</label>
    </ligand>
</feature>
<feature type="binding site" evidence="6">
    <location>
        <position position="2347"/>
    </location>
    <ligand>
        <name>Ca(2+)</name>
        <dbReference type="ChEBI" id="CHEBI:29108"/>
        <label>1</label>
    </ligand>
</feature>
<feature type="binding site" evidence="6">
    <location>
        <position position="2379"/>
    </location>
    <ligand>
        <name>Ca(2+)</name>
        <dbReference type="ChEBI" id="CHEBI:29108"/>
        <label>2</label>
    </ligand>
</feature>
<feature type="binding site" evidence="6">
    <location>
        <position position="2381"/>
    </location>
    <ligand>
        <name>Ca(2+)</name>
        <dbReference type="ChEBI" id="CHEBI:29108"/>
        <label>2</label>
    </ligand>
</feature>
<feature type="binding site" evidence="6">
    <location>
        <position position="2383"/>
    </location>
    <ligand>
        <name>Ca(2+)</name>
        <dbReference type="ChEBI" id="CHEBI:29108"/>
        <label>2</label>
    </ligand>
</feature>
<feature type="binding site" evidence="6">
    <location>
        <position position="2385"/>
    </location>
    <ligand>
        <name>Ca(2+)</name>
        <dbReference type="ChEBI" id="CHEBI:29108"/>
        <label>2</label>
    </ligand>
</feature>
<feature type="binding site" evidence="6">
    <location>
        <position position="2390"/>
    </location>
    <ligand>
        <name>Ca(2+)</name>
        <dbReference type="ChEBI" id="CHEBI:29108"/>
        <label>2</label>
    </ligand>
</feature>
<feature type="site" description="Cleavage; by mu-calpain">
    <location>
        <begin position="1176"/>
        <end position="1177"/>
    </location>
</feature>
<feature type="modified residue" description="N-acetylmethionine" evidence="36">
    <location>
        <position position="1"/>
    </location>
</feature>
<feature type="modified residue" description="Phosphoserine" evidence="3">
    <location>
        <position position="587"/>
    </location>
</feature>
<feature type="modified residue" description="N6-acetyllysine" evidence="32">
    <location>
        <position position="637"/>
    </location>
</feature>
<feature type="modified residue" description="N6-acetyllysine" evidence="3">
    <location>
        <position position="803"/>
    </location>
</feature>
<feature type="modified residue" description="Phosphoserine" evidence="2">
    <location>
        <position position="924"/>
    </location>
</feature>
<feature type="modified residue" description="Phosphoserine" evidence="34">
    <location>
        <position position="982"/>
    </location>
</feature>
<feature type="modified residue" description="Phosphoserine" evidence="34">
    <location>
        <position position="999"/>
    </location>
</feature>
<feature type="modified residue" description="Phosphoserine" evidence="3">
    <location>
        <position position="1029"/>
    </location>
</feature>
<feature type="modified residue" description="Phosphoserine" evidence="38">
    <location>
        <position position="1031"/>
    </location>
</feature>
<feature type="modified residue" description="Phosphoserine" evidence="33 37 38">
    <location>
        <position position="1041"/>
    </location>
</feature>
<feature type="modified residue" description="Phosphotyrosine" evidence="33">
    <location>
        <position position="1176"/>
    </location>
</feature>
<feature type="modified residue" description="Phosphoserine" evidence="3">
    <location>
        <position position="1190"/>
    </location>
</feature>
<feature type="modified residue" description="Phosphoserine" evidence="38">
    <location>
        <position position="1207"/>
    </location>
</feature>
<feature type="modified residue" description="Phosphoserine" evidence="31 34 35 37 38">
    <location>
        <position position="1217"/>
    </location>
</feature>
<feature type="modified residue" description="Phosphoserine" evidence="3">
    <location>
        <position position="1291"/>
    </location>
</feature>
<feature type="modified residue" description="Phosphoserine" evidence="38">
    <location>
        <position position="1306"/>
    </location>
</feature>
<feature type="modified residue" description="Phosphoserine" evidence="38">
    <location>
        <position position="1323"/>
    </location>
</feature>
<feature type="modified residue" description="Phosphoserine" evidence="38">
    <location>
        <position position="1338"/>
    </location>
</feature>
<feature type="modified residue" description="N6-acetyllysine" evidence="32">
    <location>
        <position position="1519"/>
    </location>
</feature>
<feature type="modified residue" description="Phosphoserine" evidence="37 38">
    <location>
        <position position="1550"/>
    </location>
</feature>
<feature type="modified residue" description="Phosphoserine" evidence="38">
    <location>
        <position position="1557"/>
    </location>
</feature>
<feature type="modified residue" description="Phosphoserine" evidence="38">
    <location>
        <position position="1578"/>
    </location>
</feature>
<feature type="modified residue" description="Phosphoserine" evidence="38">
    <location>
        <position position="1615"/>
    </location>
</feature>
<feature type="modified residue" description="Phosphoserine" evidence="34">
    <location>
        <position position="1647"/>
    </location>
</feature>
<feature type="modified residue" description="Phosphothreonine" evidence="38">
    <location>
        <position position="2020"/>
    </location>
</feature>
<feature type="modified residue" description="N6-acetyllysine" evidence="32">
    <location>
        <position position="2052"/>
    </location>
</feature>
<feature type="modified residue" description="N6-acetyllysine" evidence="32">
    <location>
        <position position="2421"/>
    </location>
</feature>
<feature type="splice variant" id="VSP_012271" description="In isoform 3." evidence="25 26">
    <location>
        <begin position="1053"/>
        <end position="1072"/>
    </location>
</feature>
<feature type="splice variant" id="VSP_012270" description="In isoform 2." evidence="24">
    <original>Q</original>
    <variation>QLSKLL</variation>
    <location>
        <position position="1586"/>
    </location>
</feature>
<feature type="sequence variant" id="VAR_088908" description="In SPG91; pathogenic; dbSNP:rs748232676." evidence="21 22">
    <original>R</original>
    <variation>W</variation>
    <location>
        <position position="19"/>
    </location>
</feature>
<feature type="sequence variant" id="VAR_088909" description="In HMND11; pathogenic; decreased protein levels in patient cells." evidence="19">
    <location>
        <begin position="139"/>
        <end position="2472"/>
    </location>
</feature>
<feature type="sequence variant" id="VAR_088910" description="Found in a patient with focal epilepsy and normal development; uncertain significance; dbSNP:rs2130975930." evidence="17">
    <original>G</original>
    <variation>D</variation>
    <location>
        <position position="178"/>
    </location>
</feature>
<feature type="sequence variant" id="VAR_088911" description="In DEVEP; uncertain significance; dbSNP:rs2131012797." evidence="17">
    <original>A</original>
    <variation>V</variation>
    <location>
        <position position="306"/>
    </location>
</feature>
<feature type="sequence variant" id="VAR_088912" description="In DEVEP; likely pathogenic." evidence="22">
    <location>
        <begin position="376"/>
        <end position="2472"/>
    </location>
</feature>
<feature type="sequence variant" id="VAR_038513" description="In dbSNP:rs2227863.">
    <original>N</original>
    <variation>S</variation>
    <location>
        <position position="385"/>
    </location>
</feature>
<feature type="sequence variant" id="VAR_088913" description="In DEVEP; likely pathogenic." evidence="22">
    <location>
        <begin position="627"/>
        <end position="2472"/>
    </location>
</feature>
<feature type="sequence variant" id="VAR_088914" description="In DEVEP; likely pathogenic." evidence="22">
    <location>
        <begin position="733"/>
        <end position="2472"/>
    </location>
</feature>
<feature type="sequence variant" id="VAR_035454" description="In a breast cancer sample; somatic mutation." evidence="10">
    <original>S</original>
    <variation>C</variation>
    <location>
        <position position="904"/>
    </location>
</feature>
<feature type="sequence variant" id="VAR_035455" description="In a breast cancer sample; somatic mutation." evidence="10">
    <original>P</original>
    <variation>S</variation>
    <location>
        <position position="1017"/>
    </location>
</feature>
<feature type="sequence variant" id="VAR_088915" description="In SPG91; uncertain significance; dbSNP:rs1853920585." evidence="21">
    <original>R</original>
    <variation>C</variation>
    <location>
        <position position="1098"/>
    </location>
</feature>
<feature type="sequence variant" id="VAR_088916" description="In DEVEP; uncertain significance; dbSNP:rs1554756114." evidence="17">
    <original>H</original>
    <variation>R</variation>
    <location>
        <position position="1239"/>
    </location>
</feature>
<feature type="sequence variant" id="VAR_012227" description="In dbSNP:rs1048236." evidence="15 18 23">
    <original>I</original>
    <variation>T</variation>
    <location>
        <position position="1300"/>
    </location>
</feature>
<feature type="sequence variant" id="VAR_088917" description="In DEVEP; uncertain significance; dbSNP:rs1489830382." evidence="22">
    <original>R</original>
    <variation>W</variation>
    <location>
        <position position="1464"/>
    </location>
</feature>
<feature type="sequence variant" id="VAR_088918" description="In HMND11; likely pathogenic; decreased protein levels in patient cells." evidence="19">
    <location>
        <begin position="1539"/>
        <end position="2472"/>
    </location>
</feature>
<feature type="sequence variant" id="VAR_088919" description="In DEVEP; uncertain significance; dbSNP:rs1131691643." evidence="17">
    <original>R</original>
    <variation>W</variation>
    <location>
        <position position="1605"/>
    </location>
</feature>
<feature type="sequence variant" id="VAR_088920" description="In SPG91; uncertain significance; dbSNP:rs1856600618." evidence="21">
    <original>R</original>
    <variation>C</variation>
    <location>
        <position position="1619"/>
    </location>
</feature>
<feature type="sequence variant" id="VAR_088921" description="In DEVEP; likely pathogenic." evidence="22">
    <location>
        <begin position="1641"/>
        <end position="2472"/>
    </location>
</feature>
<feature type="sequence variant" id="VAR_088922" description="In DEE5; uncertain significance; dbSNP:rs1232614751." evidence="17">
    <original>R</original>
    <variation>W</variation>
    <location>
        <position position="1771"/>
    </location>
</feature>
<feature type="sequence variant" id="VAR_035456" description="In a breast cancer sample; somatic mutation." evidence="10">
    <original>R</original>
    <variation>W</variation>
    <location>
        <position position="1794"/>
    </location>
</feature>
<feature type="sequence variant" id="VAR_035457" description="In a breast cancer sample; somatic mutation." evidence="10">
    <original>D</original>
    <variation>N</variation>
    <location>
        <position position="1918"/>
    </location>
</feature>
<feature type="sequence variant" id="VAR_088923" description="In DEE5; uncertain significance; dbSNP:rs2131953982." evidence="17">
    <original>R</original>
    <variation>W</variation>
    <location>
        <position position="2057"/>
    </location>
</feature>
<feature type="sequence variant" id="VAR_088924" description="In SPG91 and DEE5; likely pathogenic; dbSNP:rs1858669268." evidence="21 22">
    <location>
        <position position="2078"/>
    </location>
</feature>
<feature type="sequence variant" id="VAR_088925" description="In SPG91; uncertain significance; dbSNP:rs1193718145." evidence="22">
    <original>R</original>
    <variation>C</variation>
    <location>
        <position position="2119"/>
    </location>
</feature>
<feature type="sequence variant" id="VAR_088926" description="In HMND11; likely pathogenic." evidence="19">
    <location>
        <begin position="2144"/>
        <end position="2472"/>
    </location>
</feature>
<feature type="sequence variant" id="VAR_088927" description="In DEVEP; uncertain significance; dbSNP:rs1858936991." evidence="22">
    <original>R</original>
    <variation>Q</variation>
    <location>
        <position position="2199"/>
    </location>
</feature>
<feature type="sequence variant" id="VAR_063886" description="In DEE5; pathogenic; could form a heterodimer with SPTBN1 but the heterodimer is thermally unstable; suggests a dominant negative effect; dbSNP:rs587784438." evidence="12 13 17 22">
    <location>
        <position position="2202"/>
    </location>
</feature>
<feature type="sequence variant" id="VAR_088928" description="In DEE5; likely pathogenic; dbSNP:rs2131985621." evidence="17">
    <location>
        <position position="2203"/>
    </location>
</feature>
<feature type="sequence variant" id="VAR_088929" description="In HMND11; likely pathogenic." evidence="20">
    <location>
        <begin position="2256"/>
        <end position="2472"/>
    </location>
</feature>
<feature type="sequence variant" id="VAR_088930" description="In DEE5; likely pathogenic; dbSNP:rs1859859572." evidence="17 22">
    <original>E</original>
    <variation>K</variation>
    <location>
        <position position="2266"/>
    </location>
</feature>
<feature type="sequence variant" id="VAR_088931" description="In DEE5; uncertain significance; dbSNP:rs2132088836." evidence="17">
    <location>
        <position position="2279"/>
    </location>
</feature>
<feature type="sequence variant" id="VAR_088932" description="In DEVEP; likely pathogenic." evidence="17">
    <location>
        <begin position="2298"/>
        <end position="2300"/>
    </location>
</feature>
<feature type="sequence variant" id="VAR_088933" description="In DEE5; likely pathogenic." evidence="17">
    <location>
        <begin position="2299"/>
        <end position="2301"/>
    </location>
</feature>
<feature type="sequence variant" id="VAR_088934" description="In DEE5; pathogenic." evidence="14 17 22">
    <original>L</original>
    <variation>LDQL</variation>
    <location>
        <position position="2300"/>
    </location>
</feature>
<feature type="sequence variant" id="VAR_063887" description="In DEE5; likely pathogenic; could form a heterodimer with SPTBN1 but the heterodimer is thermally unstable; suggests a dominant negative effect." evidence="12 16 17">
    <original>M</original>
    <variation>MRM</variation>
    <location>
        <position position="2304"/>
    </location>
</feature>
<feature type="sequence variant" id="VAR_088935" description="In SPG91; uncertain significance; dbSNP:rs1248425869." evidence="22">
    <original>S</original>
    <variation>F</variation>
    <location>
        <position position="2443"/>
    </location>
</feature>
<feature type="sequence conflict" description="In Ref. 1; AAA51790." evidence="27" ref="1">
    <original>K</original>
    <variation>N</variation>
    <location>
        <position position="150"/>
    </location>
</feature>
<feature type="sequence conflict" description="In Ref. 1; AAA51790." evidence="27" ref="1">
    <original>S</original>
    <variation>F</variation>
    <location>
        <position position="498"/>
    </location>
</feature>
<feature type="sequence conflict" description="In Ref. 1; AAA51790, 8; AAA52468 and 9; AAA51702." evidence="27" ref="1 8 9">
    <original>I</original>
    <variation>V</variation>
    <location>
        <position position="737"/>
    </location>
</feature>
<feature type="sequence conflict" description="In Ref. 8; AAA52468 and 9; AAA51702." evidence="27" ref="8 9">
    <original>F</original>
    <variation>R</variation>
    <location>
        <position position="1595"/>
    </location>
</feature>
<feature type="sequence conflict" description="In Ref. 1; AAA51790." evidence="27" ref="1">
    <original>S</original>
    <variation>N</variation>
    <location>
        <position position="1625"/>
    </location>
</feature>
<feature type="sequence conflict" description="In Ref. 1; AAA51790." evidence="27" ref="1">
    <original>FD</original>
    <variation>IA</variation>
    <location>
        <begin position="1670"/>
        <end position="1671"/>
    </location>
</feature>
<feature type="sequence conflict" description="In Ref. 1; AAA51790." evidence="27" ref="1">
    <original>D</original>
    <variation>A</variation>
    <location>
        <position position="1918"/>
    </location>
</feature>
<feature type="sequence conflict" description="In Ref. 1; AAA51790 and 2; AAB41498." evidence="27" ref="1 2">
    <original>KL</original>
    <variation>NV</variation>
    <location>
        <begin position="1971"/>
        <end position="1972"/>
    </location>
</feature>
<feature type="sequence conflict" description="In Ref. 13; CAA60503." evidence="27" ref="13">
    <original>A</original>
    <variation>R</variation>
    <location>
        <position position="2163"/>
    </location>
</feature>
<feature type="sequence conflict" description="In Ref. 1; AAA51790." evidence="27" ref="1">
    <original>EF</original>
    <variation>DG</variation>
    <location>
        <begin position="2347"/>
        <end position="2348"/>
    </location>
</feature>
<feature type="sequence conflict" description="In Ref. 1; AAA51790." evidence="27" ref="1">
    <original>Y</original>
    <variation>I</variation>
    <location>
        <position position="2448"/>
    </location>
</feature>
<feature type="helix" evidence="40">
    <location>
        <begin position="14"/>
        <end position="25"/>
    </location>
</feature>
<feature type="helix" evidence="40">
    <location>
        <begin position="30"/>
        <end position="66"/>
    </location>
</feature>
<feature type="strand" evidence="40">
    <location>
        <begin position="74"/>
        <end position="76"/>
    </location>
</feature>
<feature type="helix" evidence="40">
    <location>
        <begin position="78"/>
        <end position="94"/>
    </location>
</feature>
<feature type="helix" evidence="40">
    <location>
        <begin position="97"/>
        <end position="112"/>
    </location>
</feature>
<feature type="helix" evidence="40">
    <location>
        <begin position="117"/>
        <end position="146"/>
    </location>
</feature>
<feature type="turn" evidence="42">
    <location>
        <begin position="967"/>
        <end position="969"/>
    </location>
</feature>
<feature type="strand" evidence="43">
    <location>
        <begin position="971"/>
        <end position="974"/>
    </location>
</feature>
<feature type="strand" evidence="43">
    <location>
        <begin position="993"/>
        <end position="998"/>
    </location>
</feature>
<feature type="strand" evidence="43">
    <location>
        <begin position="1001"/>
        <end position="1009"/>
    </location>
</feature>
<feature type="strand" evidence="43">
    <location>
        <begin position="1012"/>
        <end position="1017"/>
    </location>
</feature>
<feature type="helix" evidence="43">
    <location>
        <begin position="1018"/>
        <end position="1020"/>
    </location>
</feature>
<feature type="strand" evidence="42">
    <location>
        <begin position="1021"/>
        <end position="1023"/>
    </location>
</feature>
<feature type="helix" evidence="39">
    <location>
        <begin position="1191"/>
        <end position="1210"/>
    </location>
</feature>
<feature type="helix" evidence="41">
    <location>
        <begin position="1337"/>
        <end position="1362"/>
    </location>
</feature>
<feature type="strand" evidence="41">
    <location>
        <begin position="1369"/>
        <end position="1371"/>
    </location>
</feature>
<feature type="helix" evidence="41">
    <location>
        <begin position="1372"/>
        <end position="1389"/>
    </location>
</feature>
<feature type="helix" evidence="41">
    <location>
        <begin position="1392"/>
        <end position="1407"/>
    </location>
</feature>
<feature type="helix" evidence="41">
    <location>
        <begin position="1413"/>
        <end position="1466"/>
    </location>
</feature>
<feature type="helix" evidence="41">
    <location>
        <begin position="1480"/>
        <end position="1487"/>
    </location>
</feature>
<feature type="helix" evidence="41">
    <location>
        <begin position="1489"/>
        <end position="1513"/>
    </location>
</feature>
<feature type="helix" evidence="41">
    <location>
        <begin position="1519"/>
        <end position="1539"/>
    </location>
</feature>
<name>SPTN1_HUMAN</name>
<proteinExistence type="evidence at protein level"/>
<dbReference type="EMBL" id="J05243">
    <property type="protein sequence ID" value="AAA51790.1"/>
    <property type="molecule type" value="mRNA"/>
</dbReference>
<dbReference type="EMBL" id="U83867">
    <property type="protein sequence ID" value="AAB41498.1"/>
    <property type="molecule type" value="mRNA"/>
</dbReference>
<dbReference type="EMBL" id="AB191262">
    <property type="protein sequence ID" value="BAD52438.1"/>
    <property type="molecule type" value="mRNA"/>
</dbReference>
<dbReference type="EMBL" id="AB209860">
    <property type="protein sequence ID" value="BAD93097.1"/>
    <property type="status" value="ALT_INIT"/>
    <property type="molecule type" value="mRNA"/>
</dbReference>
<dbReference type="EMBL" id="AL356481">
    <property type="status" value="NOT_ANNOTATED_CDS"/>
    <property type="molecule type" value="Genomic_DNA"/>
</dbReference>
<dbReference type="EMBL" id="BC053521">
    <property type="protein sequence ID" value="AAH53521.1"/>
    <property type="molecule type" value="mRNA"/>
</dbReference>
<dbReference type="EMBL" id="M24773">
    <property type="protein sequence ID" value="AAA52468.1"/>
    <property type="molecule type" value="mRNA"/>
</dbReference>
<dbReference type="EMBL" id="M18627">
    <property type="protein sequence ID" value="AAA51702.1"/>
    <property type="molecule type" value="mRNA"/>
</dbReference>
<dbReference type="EMBL" id="U26396">
    <property type="protein sequence ID" value="AAB60364.1"/>
    <property type="molecule type" value="mRNA"/>
</dbReference>
<dbReference type="EMBL" id="AF148808">
    <property type="protein sequence ID" value="AAF26672.1"/>
    <property type="molecule type" value="Genomic_DNA"/>
</dbReference>
<dbReference type="EMBL" id="X86901">
    <property type="protein sequence ID" value="CAA60503.1"/>
    <property type="molecule type" value="mRNA"/>
</dbReference>
<dbReference type="CCDS" id="CCDS48036.1">
    <molecule id="Q13813-2"/>
</dbReference>
<dbReference type="CCDS" id="CCDS6905.1">
    <molecule id="Q13813-1"/>
</dbReference>
<dbReference type="CCDS" id="CCDS75914.1">
    <molecule id="Q13813-3"/>
</dbReference>
<dbReference type="PIR" id="A35715">
    <property type="entry name" value="A35715"/>
</dbReference>
<dbReference type="RefSeq" id="NP_001123910.1">
    <molecule id="Q13813-2"/>
    <property type="nucleotide sequence ID" value="NM_001130438.3"/>
</dbReference>
<dbReference type="RefSeq" id="NP_001182461.1">
    <molecule id="Q13813-3"/>
    <property type="nucleotide sequence ID" value="NM_001195532.2"/>
</dbReference>
<dbReference type="RefSeq" id="NP_001362240.1">
    <molecule id="Q13813-2"/>
    <property type="nucleotide sequence ID" value="NM_001375311.2"/>
</dbReference>
<dbReference type="RefSeq" id="NP_003118.2">
    <molecule id="Q13813-1"/>
    <property type="nucleotide sequence ID" value="NM_003127.4"/>
</dbReference>
<dbReference type="PDB" id="2FOT">
    <property type="method" value="X-ray"/>
    <property type="resolution" value="2.45 A"/>
    <property type="chains" value="C=1172-1211"/>
</dbReference>
<dbReference type="PDB" id="3F31">
    <property type="method" value="X-ray"/>
    <property type="resolution" value="2.30 A"/>
    <property type="chains" value="A/B=1-147"/>
</dbReference>
<dbReference type="PDB" id="3FB2">
    <property type="method" value="X-ray"/>
    <property type="resolution" value="2.30 A"/>
    <property type="chains" value="A/B=1337-1544"/>
</dbReference>
<dbReference type="PDB" id="5FW9">
    <property type="method" value="X-ray"/>
    <property type="resolution" value="1.55 A"/>
    <property type="chains" value="A=965-1025"/>
</dbReference>
<dbReference type="PDB" id="5FWB">
    <property type="method" value="X-ray"/>
    <property type="resolution" value="1.50 A"/>
    <property type="chains" value="A=965-1022"/>
</dbReference>
<dbReference type="PDB" id="5FWC">
    <property type="method" value="X-ray"/>
    <property type="resolution" value="1.40 A"/>
    <property type="chains" value="A=965-1022"/>
</dbReference>
<dbReference type="PDB" id="6ZEH">
    <property type="method" value="X-ray"/>
    <property type="resolution" value="1.30 A"/>
    <property type="chains" value="A/B=1025-1039"/>
</dbReference>
<dbReference type="PDBsum" id="2FOT"/>
<dbReference type="PDBsum" id="3F31"/>
<dbReference type="PDBsum" id="3FB2"/>
<dbReference type="PDBsum" id="5FW9"/>
<dbReference type="PDBsum" id="5FWB"/>
<dbReference type="PDBsum" id="5FWC"/>
<dbReference type="PDBsum" id="6ZEH"/>
<dbReference type="BMRB" id="Q13813"/>
<dbReference type="SMR" id="Q13813"/>
<dbReference type="BioGRID" id="112587">
    <property type="interactions" value="506"/>
</dbReference>
<dbReference type="CORUM" id="Q13813"/>
<dbReference type="DIP" id="DIP-33141N"/>
<dbReference type="FunCoup" id="Q13813">
    <property type="interactions" value="2258"/>
</dbReference>
<dbReference type="IntAct" id="Q13813">
    <property type="interactions" value="210"/>
</dbReference>
<dbReference type="MINT" id="Q13813"/>
<dbReference type="STRING" id="9606.ENSP00000487444"/>
<dbReference type="CarbonylDB" id="Q13813"/>
<dbReference type="GlyGen" id="Q13813">
    <property type="glycosylation" value="3 sites, 2 N-linked glycans (2 sites), 1 O-linked glycan (1 site)"/>
</dbReference>
<dbReference type="iPTMnet" id="Q13813"/>
<dbReference type="MetOSite" id="Q13813"/>
<dbReference type="PhosphoSitePlus" id="Q13813"/>
<dbReference type="SwissPalm" id="Q13813"/>
<dbReference type="BioMuta" id="SPTAN1"/>
<dbReference type="DMDM" id="94730425"/>
<dbReference type="jPOST" id="Q13813"/>
<dbReference type="MassIVE" id="Q13813"/>
<dbReference type="PaxDb" id="9606-ENSP00000361824"/>
<dbReference type="PeptideAtlas" id="Q13813"/>
<dbReference type="ProteomicsDB" id="59689">
    <molecule id="Q13813-1"/>
</dbReference>
<dbReference type="ProteomicsDB" id="59690">
    <molecule id="Q13813-2"/>
</dbReference>
<dbReference type="ProteomicsDB" id="59691">
    <molecule id="Q13813-3"/>
</dbReference>
<dbReference type="Pumba" id="Q13813"/>
<dbReference type="Antibodypedia" id="1910">
    <property type="antibodies" value="508 antibodies from 43 providers"/>
</dbReference>
<dbReference type="DNASU" id="6709"/>
<dbReference type="Ensembl" id="ENST00000358161.9">
    <molecule id="Q13813-3"/>
    <property type="protein sequence ID" value="ENSP00000350882.6"/>
    <property type="gene ID" value="ENSG00000197694.19"/>
</dbReference>
<dbReference type="Ensembl" id="ENST00000372731.8">
    <molecule id="Q13813-1"/>
    <property type="protein sequence ID" value="ENSP00000361816.4"/>
    <property type="gene ID" value="ENSG00000197694.19"/>
</dbReference>
<dbReference type="Ensembl" id="ENST00000372739.7">
    <molecule id="Q13813-2"/>
    <property type="protein sequence ID" value="ENSP00000361824.4"/>
    <property type="gene ID" value="ENSG00000197694.19"/>
</dbReference>
<dbReference type="Ensembl" id="ENST00000706487.1">
    <molecule id="Q13813-2"/>
    <property type="protein sequence ID" value="ENSP00000516412.1"/>
    <property type="gene ID" value="ENSG00000197694.19"/>
</dbReference>
<dbReference type="GeneID" id="6709"/>
<dbReference type="KEGG" id="hsa:6709"/>
<dbReference type="MANE-Select" id="ENST00000372739.7">
    <molecule id="Q13813-2"/>
    <property type="protein sequence ID" value="ENSP00000361824.4"/>
    <property type="RefSeq nucleotide sequence ID" value="NM_001130438.3"/>
    <property type="RefSeq protein sequence ID" value="NP_001123910.1"/>
</dbReference>
<dbReference type="UCSC" id="uc004bvl.5">
    <molecule id="Q13813-1"/>
    <property type="organism name" value="human"/>
</dbReference>
<dbReference type="AGR" id="HGNC:11273"/>
<dbReference type="CTD" id="6709"/>
<dbReference type="DisGeNET" id="6709"/>
<dbReference type="GeneCards" id="SPTAN1"/>
<dbReference type="HGNC" id="HGNC:11273">
    <property type="gene designation" value="SPTAN1"/>
</dbReference>
<dbReference type="HPA" id="ENSG00000197694">
    <property type="expression patterns" value="Low tissue specificity"/>
</dbReference>
<dbReference type="MalaCards" id="SPTAN1"/>
<dbReference type="MIM" id="182810">
    <property type="type" value="gene"/>
</dbReference>
<dbReference type="MIM" id="613477">
    <property type="type" value="phenotype"/>
</dbReference>
<dbReference type="MIM" id="620528">
    <property type="type" value="phenotype"/>
</dbReference>
<dbReference type="MIM" id="620538">
    <property type="type" value="phenotype"/>
</dbReference>
<dbReference type="MIM" id="620540">
    <property type="type" value="phenotype"/>
</dbReference>
<dbReference type="neXtProt" id="NX_Q13813"/>
<dbReference type="OpenTargets" id="ENSG00000197694"/>
<dbReference type="Orphanet" id="3451">
    <property type="disease" value="Infantile epileptic spasms syndrome"/>
</dbReference>
<dbReference type="PharmGKB" id="PA36102"/>
<dbReference type="VEuPathDB" id="HostDB:ENSG00000197694"/>
<dbReference type="eggNOG" id="KOG0040">
    <property type="taxonomic scope" value="Eukaryota"/>
</dbReference>
<dbReference type="GeneTree" id="ENSGT00940000156662"/>
<dbReference type="HOGENOM" id="CLU_000847_0_0_1"/>
<dbReference type="InParanoid" id="Q13813"/>
<dbReference type="OMA" id="FQIAQEE"/>
<dbReference type="OrthoDB" id="6018565at2759"/>
<dbReference type="PAN-GO" id="Q13813">
    <property type="GO annotations" value="6 GO annotations based on evolutionary models"/>
</dbReference>
<dbReference type="PhylomeDB" id="Q13813"/>
<dbReference type="TreeFam" id="TF343803"/>
<dbReference type="PathwayCommons" id="Q13813"/>
<dbReference type="Reactome" id="R-HSA-264870">
    <property type="pathway name" value="Caspase-mediated cleavage of cytoskeletal proteins"/>
</dbReference>
<dbReference type="Reactome" id="R-HSA-373753">
    <property type="pathway name" value="Nephrin family interactions"/>
</dbReference>
<dbReference type="Reactome" id="R-HSA-375165">
    <property type="pathway name" value="NCAM signaling for neurite out-growth"/>
</dbReference>
<dbReference type="Reactome" id="R-HSA-445095">
    <property type="pathway name" value="Interaction between L1 and Ankyrins"/>
</dbReference>
<dbReference type="Reactome" id="R-HSA-5673001">
    <property type="pathway name" value="RAF/MAP kinase cascade"/>
</dbReference>
<dbReference type="Reactome" id="R-HSA-6798695">
    <property type="pathway name" value="Neutrophil degranulation"/>
</dbReference>
<dbReference type="Reactome" id="R-HSA-6807878">
    <property type="pathway name" value="COPI-mediated anterograde transport"/>
</dbReference>
<dbReference type="Reactome" id="R-HSA-9013420">
    <property type="pathway name" value="RHOU GTPase cycle"/>
</dbReference>
<dbReference type="Reactome" id="R-HSA-9013424">
    <property type="pathway name" value="RHOV GTPase cycle"/>
</dbReference>
<dbReference type="Reactome" id="R-HSA-9662360">
    <property type="pathway name" value="Sensory processing of sound by inner hair cells of the cochlea"/>
</dbReference>
<dbReference type="Reactome" id="R-HSA-9662361">
    <property type="pathway name" value="Sensory processing of sound by outer hair cells of the cochlea"/>
</dbReference>
<dbReference type="SignaLink" id="Q13813"/>
<dbReference type="SIGNOR" id="Q13813"/>
<dbReference type="BioGRID-ORCS" id="6709">
    <property type="hits" value="25 hits in 1156 CRISPR screens"/>
</dbReference>
<dbReference type="CD-CODE" id="232F8A39">
    <property type="entry name" value="P-body"/>
</dbReference>
<dbReference type="CD-CODE" id="FB4E32DD">
    <property type="entry name" value="Presynaptic clusters and postsynaptic densities"/>
</dbReference>
<dbReference type="ChiTaRS" id="SPTAN1">
    <property type="organism name" value="human"/>
</dbReference>
<dbReference type="EvolutionaryTrace" id="Q13813"/>
<dbReference type="GeneWiki" id="SPTAN1"/>
<dbReference type="GenomeRNAi" id="6709"/>
<dbReference type="Pharos" id="Q13813">
    <property type="development level" value="Tbio"/>
</dbReference>
<dbReference type="PRO" id="PR:Q13813"/>
<dbReference type="Proteomes" id="UP000005640">
    <property type="component" value="Chromosome 9"/>
</dbReference>
<dbReference type="RNAct" id="Q13813">
    <property type="molecule type" value="protein"/>
</dbReference>
<dbReference type="Bgee" id="ENSG00000197694">
    <property type="expression patterns" value="Expressed in right hemisphere of cerebellum and 202 other cell types or tissues"/>
</dbReference>
<dbReference type="ExpressionAtlas" id="Q13813">
    <property type="expression patterns" value="baseline and differential"/>
</dbReference>
<dbReference type="GO" id="GO:0030054">
    <property type="term" value="C:cell junction"/>
    <property type="evidence" value="ECO:0000318"/>
    <property type="project" value="GO_Central"/>
</dbReference>
<dbReference type="GO" id="GO:0042995">
    <property type="term" value="C:cell projection"/>
    <property type="evidence" value="ECO:0000318"/>
    <property type="project" value="GO_Central"/>
</dbReference>
<dbReference type="GO" id="GO:0030864">
    <property type="term" value="C:cortical actin cytoskeleton"/>
    <property type="evidence" value="ECO:0000318"/>
    <property type="project" value="GO_Central"/>
</dbReference>
<dbReference type="GO" id="GO:0005829">
    <property type="term" value="C:cytosol"/>
    <property type="evidence" value="ECO:0000304"/>
    <property type="project" value="Reactome"/>
</dbReference>
<dbReference type="GO" id="GO:0070062">
    <property type="term" value="C:extracellular exosome"/>
    <property type="evidence" value="ECO:0007005"/>
    <property type="project" value="UniProtKB"/>
</dbReference>
<dbReference type="GO" id="GO:0005576">
    <property type="term" value="C:extracellular region"/>
    <property type="evidence" value="ECO:0000304"/>
    <property type="project" value="Reactome"/>
</dbReference>
<dbReference type="GO" id="GO:1903561">
    <property type="term" value="C:extracellular vesicle"/>
    <property type="evidence" value="ECO:0007005"/>
    <property type="project" value="UniProtKB"/>
</dbReference>
<dbReference type="GO" id="GO:0043231">
    <property type="term" value="C:intracellular membrane-bounded organelle"/>
    <property type="evidence" value="ECO:0000314"/>
    <property type="project" value="HPA"/>
</dbReference>
<dbReference type="GO" id="GO:0016020">
    <property type="term" value="C:membrane"/>
    <property type="evidence" value="ECO:0000304"/>
    <property type="project" value="ProtInc"/>
</dbReference>
<dbReference type="GO" id="GO:0015630">
    <property type="term" value="C:microtubule cytoskeleton"/>
    <property type="evidence" value="ECO:0000314"/>
    <property type="project" value="HPA"/>
</dbReference>
<dbReference type="GO" id="GO:0005886">
    <property type="term" value="C:plasma membrane"/>
    <property type="evidence" value="ECO:0000318"/>
    <property type="project" value="GO_Central"/>
</dbReference>
<dbReference type="GO" id="GO:0035580">
    <property type="term" value="C:specific granule lumen"/>
    <property type="evidence" value="ECO:0000304"/>
    <property type="project" value="Reactome"/>
</dbReference>
<dbReference type="GO" id="GO:0008091">
    <property type="term" value="C:spectrin"/>
    <property type="evidence" value="ECO:0000304"/>
    <property type="project" value="ProtInc"/>
</dbReference>
<dbReference type="GO" id="GO:1904724">
    <property type="term" value="C:tertiary granule lumen"/>
    <property type="evidence" value="ECO:0000304"/>
    <property type="project" value="Reactome"/>
</dbReference>
<dbReference type="GO" id="GO:0003779">
    <property type="term" value="F:actin binding"/>
    <property type="evidence" value="ECO:0000304"/>
    <property type="project" value="ProtInc"/>
</dbReference>
<dbReference type="GO" id="GO:0051015">
    <property type="term" value="F:actin filament binding"/>
    <property type="evidence" value="ECO:0000318"/>
    <property type="project" value="GO_Central"/>
</dbReference>
<dbReference type="GO" id="GO:0045296">
    <property type="term" value="F:cadherin binding"/>
    <property type="evidence" value="ECO:0007005"/>
    <property type="project" value="BHF-UCL"/>
</dbReference>
<dbReference type="GO" id="GO:0005509">
    <property type="term" value="F:calcium ion binding"/>
    <property type="evidence" value="ECO:0007669"/>
    <property type="project" value="InterPro"/>
</dbReference>
<dbReference type="GO" id="GO:0005516">
    <property type="term" value="F:calmodulin binding"/>
    <property type="evidence" value="ECO:0007669"/>
    <property type="project" value="UniProtKB-KW"/>
</dbReference>
<dbReference type="GO" id="GO:0005200">
    <property type="term" value="F:structural constituent of cytoskeleton"/>
    <property type="evidence" value="ECO:0000304"/>
    <property type="project" value="ProtInc"/>
</dbReference>
<dbReference type="GO" id="GO:0030036">
    <property type="term" value="P:actin cytoskeleton organization"/>
    <property type="evidence" value="ECO:0000318"/>
    <property type="project" value="GO_Central"/>
</dbReference>
<dbReference type="GO" id="GO:0051693">
    <property type="term" value="P:actin filament capping"/>
    <property type="evidence" value="ECO:0007669"/>
    <property type="project" value="UniProtKB-KW"/>
</dbReference>
<dbReference type="CDD" id="cd00051">
    <property type="entry name" value="EFh"/>
    <property type="match status" value="1"/>
</dbReference>
<dbReference type="CDD" id="cd11808">
    <property type="entry name" value="SH3_Alpha_Spectrin"/>
    <property type="match status" value="1"/>
</dbReference>
<dbReference type="CDD" id="cd00176">
    <property type="entry name" value="SPEC"/>
    <property type="match status" value="12"/>
</dbReference>
<dbReference type="FunFam" id="1.20.58.60:FF:000007">
    <property type="entry name" value="Spectrin alpha chain non-erythrocytic 1"/>
    <property type="match status" value="2"/>
</dbReference>
<dbReference type="FunFam" id="1.20.58.60:FF:000037">
    <property type="entry name" value="Spectrin alpha chain non-erythrocytic 1"/>
    <property type="match status" value="1"/>
</dbReference>
<dbReference type="FunFam" id="1.10.238.10:FF:000032">
    <property type="entry name" value="Spectrin alpha chain, non-erythrocytic 1"/>
    <property type="match status" value="1"/>
</dbReference>
<dbReference type="FunFam" id="1.20.5.170:FF:000014">
    <property type="entry name" value="Spectrin alpha chain, non-erythrocytic 1"/>
    <property type="match status" value="1"/>
</dbReference>
<dbReference type="FunFam" id="1.20.58.60:FF:000006">
    <property type="entry name" value="Spectrin alpha chain, non-erythrocytic 1"/>
    <property type="match status" value="3"/>
</dbReference>
<dbReference type="FunFam" id="1.20.58.60:FF:000013">
    <property type="entry name" value="Spectrin alpha chain, non-erythrocytic 1"/>
    <property type="match status" value="2"/>
</dbReference>
<dbReference type="FunFam" id="1.20.58.60:FF:000017">
    <property type="entry name" value="Spectrin alpha chain, non-erythrocytic 1"/>
    <property type="match status" value="1"/>
</dbReference>
<dbReference type="FunFam" id="1.20.58.60:FF:000020">
    <property type="entry name" value="Spectrin alpha chain, non-erythrocytic 1"/>
    <property type="match status" value="1"/>
</dbReference>
<dbReference type="FunFam" id="1.20.58.60:FF:000026">
    <property type="entry name" value="Spectrin alpha chain, non-erythrocytic 1"/>
    <property type="match status" value="2"/>
</dbReference>
<dbReference type="FunFam" id="1.20.58.60:FF:000035">
    <property type="entry name" value="Spectrin alpha chain, non-erythrocytic 1"/>
    <property type="match status" value="1"/>
</dbReference>
<dbReference type="FunFam" id="1.20.58.60:FF:000043">
    <property type="entry name" value="Spectrin alpha chain, non-erythrocytic 1"/>
    <property type="match status" value="1"/>
</dbReference>
<dbReference type="FunFam" id="1.20.58.60:FF:000046">
    <property type="entry name" value="Spectrin alpha chain, non-erythrocytic 1"/>
    <property type="match status" value="1"/>
</dbReference>
<dbReference type="FunFam" id="1.20.58.60:FF:000071">
    <property type="entry name" value="Spectrin alpha chain, non-erythrocytic 1"/>
    <property type="match status" value="1"/>
</dbReference>
<dbReference type="FunFam" id="1.20.58.60:FF:000078">
    <property type="entry name" value="Spectrin alpha chain, non-erythrocytic 1"/>
    <property type="match status" value="1"/>
</dbReference>
<dbReference type="FunFam" id="1.20.58.60:FF:000079">
    <property type="entry name" value="Spectrin alpha chain, non-erythrocytic 1"/>
    <property type="match status" value="1"/>
</dbReference>
<dbReference type="FunFam" id="1.20.58.60:FF:000080">
    <property type="entry name" value="Spectrin alpha chain, non-erythrocytic 1"/>
    <property type="match status" value="1"/>
</dbReference>
<dbReference type="FunFam" id="2.30.30.40:FF:000036">
    <property type="entry name" value="Spectrin alpha chain, non-erythrocytic 1"/>
    <property type="match status" value="1"/>
</dbReference>
<dbReference type="FunFam" id="1.10.238.10:FF:000020">
    <property type="entry name" value="spectrin alpha chain, non-erythrocytic 1"/>
    <property type="match status" value="1"/>
</dbReference>
<dbReference type="FunFam" id="1.20.58.60:FF:000100">
    <property type="entry name" value="spectrin alpha chain, non-erythrocytic 1 isoform X1"/>
    <property type="match status" value="1"/>
</dbReference>
<dbReference type="Gene3D" id="1.20.5.170">
    <property type="match status" value="1"/>
</dbReference>
<dbReference type="Gene3D" id="1.20.58.60">
    <property type="match status" value="20"/>
</dbReference>
<dbReference type="Gene3D" id="1.10.238.10">
    <property type="entry name" value="EF-hand"/>
    <property type="match status" value="2"/>
</dbReference>
<dbReference type="Gene3D" id="2.30.30.40">
    <property type="entry name" value="SH3 Domains"/>
    <property type="match status" value="1"/>
</dbReference>
<dbReference type="InterPro" id="IPR035825">
    <property type="entry name" value="Alpha_Spectrin_SH3"/>
</dbReference>
<dbReference type="InterPro" id="IPR011992">
    <property type="entry name" value="EF-hand-dom_pair"/>
</dbReference>
<dbReference type="InterPro" id="IPR014837">
    <property type="entry name" value="EF-hand_Ca_insen"/>
</dbReference>
<dbReference type="InterPro" id="IPR018247">
    <property type="entry name" value="EF_Hand_1_Ca_BS"/>
</dbReference>
<dbReference type="InterPro" id="IPR002048">
    <property type="entry name" value="EF_hand_dom"/>
</dbReference>
<dbReference type="InterPro" id="IPR036028">
    <property type="entry name" value="SH3-like_dom_sf"/>
</dbReference>
<dbReference type="InterPro" id="IPR001452">
    <property type="entry name" value="SH3_domain"/>
</dbReference>
<dbReference type="InterPro" id="IPR018159">
    <property type="entry name" value="Spectrin/alpha-actinin"/>
</dbReference>
<dbReference type="InterPro" id="IPR002017">
    <property type="entry name" value="Spectrin_repeat"/>
</dbReference>
<dbReference type="PANTHER" id="PTHR11915">
    <property type="entry name" value="SPECTRIN/FILAMIN RELATED CYTOSKELETAL PROTEIN"/>
    <property type="match status" value="1"/>
</dbReference>
<dbReference type="Pfam" id="PF13499">
    <property type="entry name" value="EF-hand_7"/>
    <property type="match status" value="1"/>
</dbReference>
<dbReference type="Pfam" id="PF08726">
    <property type="entry name" value="EFhand_Ca_insen"/>
    <property type="match status" value="1"/>
</dbReference>
<dbReference type="Pfam" id="PF00018">
    <property type="entry name" value="SH3_1"/>
    <property type="match status" value="1"/>
</dbReference>
<dbReference type="Pfam" id="PF00435">
    <property type="entry name" value="Spectrin"/>
    <property type="match status" value="20"/>
</dbReference>
<dbReference type="PRINTS" id="PR00452">
    <property type="entry name" value="SH3DOMAIN"/>
</dbReference>
<dbReference type="PRINTS" id="PR01887">
    <property type="entry name" value="SPECTRNALPHA"/>
</dbReference>
<dbReference type="SMART" id="SM00054">
    <property type="entry name" value="EFh"/>
    <property type="match status" value="2"/>
</dbReference>
<dbReference type="SMART" id="SM01184">
    <property type="entry name" value="efhand_Ca_insen"/>
    <property type="match status" value="1"/>
</dbReference>
<dbReference type="SMART" id="SM00326">
    <property type="entry name" value="SH3"/>
    <property type="match status" value="1"/>
</dbReference>
<dbReference type="SMART" id="SM00150">
    <property type="entry name" value="SPEC"/>
    <property type="match status" value="20"/>
</dbReference>
<dbReference type="SUPFAM" id="SSF47473">
    <property type="entry name" value="EF-hand"/>
    <property type="match status" value="1"/>
</dbReference>
<dbReference type="SUPFAM" id="SSF50044">
    <property type="entry name" value="SH3-domain"/>
    <property type="match status" value="1"/>
</dbReference>
<dbReference type="SUPFAM" id="SSF46966">
    <property type="entry name" value="Spectrin repeat"/>
    <property type="match status" value="15"/>
</dbReference>
<dbReference type="PROSITE" id="PS00018">
    <property type="entry name" value="EF_HAND_1"/>
    <property type="match status" value="2"/>
</dbReference>
<dbReference type="PROSITE" id="PS50222">
    <property type="entry name" value="EF_HAND_2"/>
    <property type="match status" value="3"/>
</dbReference>
<dbReference type="PROSITE" id="PS50002">
    <property type="entry name" value="SH3"/>
    <property type="match status" value="1"/>
</dbReference>
<keyword id="KW-0002">3D-structure</keyword>
<keyword id="KW-0007">Acetylation</keyword>
<keyword id="KW-0117">Actin capping</keyword>
<keyword id="KW-0009">Actin-binding</keyword>
<keyword id="KW-0025">Alternative splicing</keyword>
<keyword id="KW-0106">Calcium</keyword>
<keyword id="KW-0112">Calmodulin-binding</keyword>
<keyword id="KW-0963">Cytoplasm</keyword>
<keyword id="KW-0206">Cytoskeleton</keyword>
<keyword id="KW-0903">Direct protein sequencing</keyword>
<keyword id="KW-0225">Disease variant</keyword>
<keyword id="KW-0887">Epilepsy</keyword>
<keyword id="KW-0890">Hereditary spastic paraplegia</keyword>
<keyword id="KW-0991">Intellectual disability</keyword>
<keyword id="KW-0479">Metal-binding</keyword>
<keyword id="KW-0523">Neurodegeneration</keyword>
<keyword id="KW-0622">Neuropathy</keyword>
<keyword id="KW-0597">Phosphoprotein</keyword>
<keyword id="KW-1267">Proteomics identification</keyword>
<keyword id="KW-1185">Reference proteome</keyword>
<keyword id="KW-0677">Repeat</keyword>
<keyword id="KW-0728">SH3 domain</keyword>
<organism>
    <name type="scientific">Homo sapiens</name>
    <name type="common">Human</name>
    <dbReference type="NCBI Taxonomy" id="9606"/>
    <lineage>
        <taxon>Eukaryota</taxon>
        <taxon>Metazoa</taxon>
        <taxon>Chordata</taxon>
        <taxon>Craniata</taxon>
        <taxon>Vertebrata</taxon>
        <taxon>Euteleostomi</taxon>
        <taxon>Mammalia</taxon>
        <taxon>Eutheria</taxon>
        <taxon>Euarchontoglires</taxon>
        <taxon>Primates</taxon>
        <taxon>Haplorrhini</taxon>
        <taxon>Catarrhini</taxon>
        <taxon>Hominidae</taxon>
        <taxon>Homo</taxon>
    </lineage>
</organism>
<accession>Q13813</accession>
<accession>Q13186</accession>
<accession>Q15324</accession>
<accession>Q16606</accession>
<accession>Q59EF1</accession>
<accession>Q5VXV5</accession>
<accession>Q5VXV6</accession>
<accession>Q7Z6M5</accession>
<accession>Q9P0V0</accession>
<comment type="function">
    <text>Fodrin, which seems to be involved in secretion, interacts with calmodulin in a calcium-dependent manner and is thus candidate for the calcium-dependent movement of the cytoskeleton at the membrane.</text>
</comment>
<comment type="subunit">
    <text evidence="7 8 9 11 28">Like erythrocyte spectrin, the spectrin-like proteins are capable of forming dimers which can further associate to tetramers. Interacts (via C-terminal spectrin repeats) with TRPC4. Interacts with CALM and EMD. Interacts with isoform 1 of ACP1. Identified in a complex with ACTN4, CASK, IQGAP1, MAGI2, NPHS1 and SPTBN1. Interacts with SHANK3 (via ANK repeats). Interacts with CLN3; this interaction regulates the fodrin localization at the plasma membrane (Probable).</text>
</comment>
<comment type="interaction">
    <interactant intactId="EBI-351450">
        <id>Q13813</id>
    </interactant>
    <interactant intactId="EBI-1642116">
        <id>Q05682</id>
        <label>CALD1</label>
    </interactant>
    <organismsDiffer>false</organismsDiffer>
    <experiments>2</experiments>
</comment>
<comment type="interaction">
    <interactant intactId="EBI-351450">
        <id>Q13813</id>
    </interactant>
    <interactant intactId="EBI-529989">
        <id>Q9NRI5</id>
        <label>DISC1</label>
    </interactant>
    <organismsDiffer>false</organismsDiffer>
    <experiments>3</experiments>
</comment>
<comment type="interaction">
    <interactant intactId="EBI-351450">
        <id>Q13813</id>
    </interactant>
    <interactant intactId="EBI-346653">
        <id>Q9UI08</id>
        <label>EVL</label>
    </interactant>
    <organismsDiffer>false</organismsDiffer>
    <experiments>4</experiments>
</comment>
<comment type="interaction">
    <interactant intactId="EBI-351450">
        <id>Q13813</id>
    </interactant>
    <interactant intactId="EBI-81610">
        <id>O15287</id>
        <label>FANCG</label>
    </interactant>
    <organismsDiffer>false</organismsDiffer>
    <experiments>4</experiments>
</comment>
<comment type="interaction">
    <interactant intactId="EBI-351450">
        <id>Q13813</id>
    </interactant>
    <interactant intactId="EBI-744248">
        <id>P40692</id>
        <label>MLH1</label>
    </interactant>
    <organismsDiffer>false</organismsDiffer>
    <experiments>6</experiments>
</comment>
<comment type="interaction">
    <interactant intactId="EBI-351450">
        <id>Q13813</id>
    </interactant>
    <interactant intactId="EBI-351561">
        <id>Q01082</id>
        <label>SPTBN1</label>
    </interactant>
    <organismsDiffer>false</organismsDiffer>
    <experiments>8</experiments>
</comment>
<comment type="subcellular location">
    <subcellularLocation>
        <location>Cytoplasm</location>
        <location>Cytoskeleton</location>
    </subcellularLocation>
    <subcellularLocation>
        <location>Cytoplasm</location>
        <location>Cell cortex</location>
    </subcellularLocation>
    <text evidence="1">Expressed along the cell membrane in podocytes and presumptive tubule cells during glomerulogenesis and is expressed along lateral cell margins in tubule cells.</text>
</comment>
<comment type="alternative products">
    <event type="alternative splicing"/>
    <isoform>
        <id>Q13813-1</id>
        <name>1</name>
        <sequence type="displayed"/>
    </isoform>
    <isoform>
        <id>Q13813-2</id>
        <name>2</name>
        <sequence type="described" ref="VSP_012270"/>
    </isoform>
    <isoform>
        <id>Q13813-3</id>
        <name>3</name>
        <sequence type="described" ref="VSP_012271"/>
    </isoform>
</comment>
<comment type="PTM">
    <text evidence="1">Phosphorylation of Tyr-1176 decreases sensitivity to cleavage by calpain in vitro.</text>
</comment>
<comment type="disease" evidence="12 13 14 16 17 22">
    <disease id="DI-02791">
        <name>Developmental and epileptic encephalopathy 5</name>
        <acronym>DEE5</acronym>
        <description>A disorder characterized by seizures associated with hypsarrhythmia, profound intellectual disability with lack of visual attention and speech development, as well as spastic quadriplegia.</description>
        <dbReference type="MIM" id="613477"/>
    </disease>
    <text>The disease is caused by variants affecting the gene represented in this entry.</text>
</comment>
<comment type="disease" evidence="17 22">
    <disease id="DI-06777">
        <name>Developmental delay with or without epilepsy</name>
        <acronym>DEVEP</acronym>
        <description>An autosomal dominant neurodevelopmental disorder apparent from infancy or early childhood, and characterized by impaired intellectual development, speech delay, motor delay, and behavioral abnormalities. About half of patients develop various types of seizures. Some affected individuals have cerebellar atrophy and ataxia.</description>
        <dbReference type="MIM" id="620540"/>
    </disease>
    <text>The disease is caused by variants affecting the gene represented in this entry.</text>
</comment>
<comment type="disease" evidence="19 20">
    <disease id="DI-06766">
        <name>Neuronopathy, distal hereditary motor, autosomal dominant 11</name>
        <acronym>HMND11</acronym>
        <description>A form of distal hereditary motor neuronopathy, a heterogeneous group of neuromuscular diseases caused by selective degeneration of motor neurons in the anterior horn of the spinal cord, without sensory deficit in the posterior horn. HMND11 is an autosomal dominant form with incomplete penetrance, characterized by juvenile or young-adult onset of distal limb muscle weakness and atrophy mainly affecting the lower limbs, resulting in gait instability and walking difficulties. Some affected individuals may have distal upper limb and hand involvement or mild distal sensory abnormalities, but motor symptoms dominate the clinical picture.</description>
        <dbReference type="MIM" id="620528"/>
    </disease>
    <text>The disease is caused by variants affecting the gene represented in this entry.</text>
</comment>
<comment type="disease" evidence="21 22">
    <disease id="DI-06776">
        <name>Spastic paraplegia 91, autosomal dominant, with or without cerebellar ataxia</name>
        <acronym>SPG91</acronym>
        <description>A form of spastic paraplegia, a neurodegenerative disorder characterized by a slow, gradual, progressive weakness and spasticity of the lower limbs. Rate of progression and the severity of symptoms are quite variable. Initial symptoms may include difficulty with balance, weakness and stiffness in the legs, muscle spasms, and dragging the toes when walking. In some forms of the disorder, bladder symptoms (such as incontinence) may appear, or the weakness and stiffness may spread to other parts of the body. SPG91 is an autosomal dominant form characterized by gait abnormalities, sometimes associated with cerebellar ataxia. Additional features may include sensory abnormalities, peripheral neuropathy, optic neuropathy, developmental delay, impaired intellectual development, and seizures. Most patients have symptoms onset in the first decade of life, although age at onset is highly variable and ranges from birth to young adulthood.</description>
        <dbReference type="MIM" id="620538"/>
    </disease>
    <text>The disease is caused by variants affecting the gene represented in this entry.</text>
</comment>
<comment type="similarity">
    <text evidence="27">Belongs to the spectrin family.</text>
</comment>
<comment type="sequence caution" evidence="27">
    <conflict type="erroneous initiation">
        <sequence resource="EMBL-CDS" id="BAD93097"/>
    </conflict>
    <text>Extended N-terminus.</text>
</comment>
<sequence length="2472" mass="284539">MDPSGVKVLETAEDIQERRQQVLDRYHRFKELSTLRRQKLEDSYRFQFFQRDAEELEKWIQEKLQIASDENYKDPTNLQGKLQKHQAFEAEVQANSGAIVKLDETGNLMISEGHFASETIRTRLMELHRQWELLLEKMREKGIKLLQAQKLVQYLRECEDVMDWINDKEAIVTSEELGQDLEHVEVLQKKFEEFQTDMAAHEERVNEVNQFAAKLIQEQHPEEELIKTKQDEVNAAWQRLKGLALQRQGKLFGAAEVQRFNRDVDETISWIKEKEQLMASDDFGRDLASVQALLRKHEGLERDLAALEDKVKALCAEADRLQQSHPLSATQIQVKREELITNWEQIRTLAAERHARLNDSYRLQRFLADFRDLTSWVTEMKALINADELASDVAGAEALLDRHQEHKGEIDAHEDSFKSADESGQALLAAGHYASDEVREKLTVLSEERAALLELWELRRQQYEQCMDLQLFYRDTEQVDNWMSKQEAFLLNEDLGDSLDSVEALLKKHEDFEKSLSAQEEKITALDEFATKLIQNNHYAMEDVATRRDALLSRRNALHERAMRRRAQLADSFHLQQFFRDSDELKSWVNEKMKTATDEAYKDPSNLQGKVQKHQAFEAELSANQSRIDALEKAGQKLIDVNHYAKDEVAARMNEVISLWKKLLEATELKGIKLREANQQQQFNRNVEDIELWLYEVEGHLASDDYGKDLTNVQNLQKKHALLEADVAAHQDRIDGITIQARQFQDAGHFDAENIKKKQEALVARYEALKEPMVARKQKLADSLRLQQLFRDVEDEETWIREKEPIAASTNRGKDLIGVQNLLKKHQALQAEIAGHEPRIKAVTQKGNAMVEEGHFAAEDVKAKLHELNQKWEALKAKASQRRQDLEDSLQAQQYFADANEAESWMREKEPIVGSTDYGKDEDSAEALLKKHEALMSDLSAYGSSIQALREQAQSCRQQVAPTDDETGKELVLALYDYQEKSPREVTMKKGDILTLLNSTNKDWWKVEVNDRQGFVPAAYVKKLDPAQSASRENLLEEQGSIALRQEQIDNQTRITKEAGSVSLRMKQVEELYHSLLELGEKRKGMLEKSCKKFMLFREANELQQWINEKEAALTSEEVGADLEQVEVLQKKFDDFQKDLKANESRLKDINKVAEDLESEGLMAEEVQAVQQQEVYGMMPRDETDSKTASPWKSARLMVHTVATFNSIKELNERWRSLQQLAEERSQLLGSAHEVQRFHRDADETKEWIEEKNQALNTDNYGHDLASVQALQRKHEGFERDLAALGDKVNSLGETAERLIQSHPESAEDLQEKCTELNQAWSSLGKRADQRKAKLGDSHDLQRFLSDFRDLMSWINGIRGLVSSDELAKDVTGAEALLERHQEHRTEIDARAGTFQAFEQFGQQLLAHGHYASPEIKQKLDILDQERADLEKAWVQRRMMLDQCLELQLFHRDCEQAENWMAAREAFLNTEDKGDSLDSVEALIKKHEDFDKAINVQEEKIAALQAFADQLIAAGHYAKGDISSRRNEVLDRWRRLKAQMIEKRSKLGESQTLQQFSRDVDEIEAWISEKLQTASDESYKDPTNIQSKHQKHQAFEAELHANADRIRGVIDMGNSLIERGACAGSEDAVKARLAALADQWQFLVQKSAEKSQKLKEANKQQNFNTGIKDFDFWLSEVEALLASEDYGKDLASVNNLLKKHQLLEADISAHEDRLKDLNSQADSLMTSSAFDTSQVKDKRDTINGRFQKIKSMAASRRAKLNESHRLHQFFRDMDDEESWIKEKKLLVGSEDYGRDLTGVQNLRKKHKRLEAELAAHEPAIQGVLDTGKKLSDDNTIGKEEIQQRLAQFVEHWKELKQLAAARGQRLEESLEYQQFVANVEEEEAWINEKMTLVASEDYGDTLAAIQGLLKKHEAFETDFTVHKDRVNDVCTNGQDLIKKNNHHEENISSKMKGLNGKVSDLEKAAAQRKAKLDENSAFLQFNWKADVVESWIGEKENSLKTDDYGRDLSSVQTLLTKQETFDAGLQAFQQEGIANITALKDQLLAAKHVQSKAIEARHASLMKRWSQLLANSAARKKKLLEAQSHFRKVEDLFLTFAKKASAFNSWFENAEEDLTDPVRCNSLEEIKALREAHDAFRSSLSSAQADFNQLAELDRQIKSFRVASNPYTWFTMEALEETWRNLQKIIKERELELQKEQRRQEENDKLRQEFAQHANAFHQWIQETRTYLLDGSCMVEESGTLESQLEATKRKHQEIRAMRSQLKKIEDLGAAMEEALILDNKYTEHSTVGLAQQWDQLDQLGMRMQHNLEQQIQARNTTGVTEEALKEFSMMFKHFDKDKSGRLNHQEFKSCLRSLGYDLPMVEEGEPDPEFEAILDTVDPNRDGHVSLQEYMAFMISRETENVKSSEEIESAFRALSSEGKPYVTKEELYQNLTREQADYCVSHMKPYVDGKGRELPTAFDYVEFTRSLFVN</sequence>
<gene>
    <name type="primary">SPTAN1</name>
    <name type="synonym">NEAS</name>
    <name type="synonym">SPTA2</name>
</gene>
<protein>
    <recommendedName>
        <fullName>Spectrin alpha chain, non-erythrocytic 1</fullName>
    </recommendedName>
    <alternativeName>
        <fullName>Alpha-II spectrin</fullName>
    </alternativeName>
    <alternativeName>
        <fullName>Fodrin alpha chain</fullName>
    </alternativeName>
    <alternativeName>
        <fullName>Spectrin, non-erythroid alpha subunit</fullName>
    </alternativeName>
</protein>
<evidence type="ECO:0000250" key="1"/>
<evidence type="ECO:0000250" key="2">
    <source>
        <dbReference type="UniProtKB" id="P16086"/>
    </source>
</evidence>
<evidence type="ECO:0000250" key="3">
    <source>
        <dbReference type="UniProtKB" id="P16546"/>
    </source>
</evidence>
<evidence type="ECO:0000255" key="4"/>
<evidence type="ECO:0000255" key="5">
    <source>
        <dbReference type="PROSITE-ProRule" id="PRU00192"/>
    </source>
</evidence>
<evidence type="ECO:0000255" key="6">
    <source>
        <dbReference type="PROSITE-ProRule" id="PRU00448"/>
    </source>
</evidence>
<evidence type="ECO:0000269" key="7">
    <source>
    </source>
</evidence>
<evidence type="ECO:0000269" key="8">
    <source>
    </source>
</evidence>
<evidence type="ECO:0000269" key="9">
    <source>
    </source>
</evidence>
<evidence type="ECO:0000269" key="10">
    <source>
    </source>
</evidence>
<evidence type="ECO:0000269" key="11">
    <source>
    </source>
</evidence>
<evidence type="ECO:0000269" key="12">
    <source>
    </source>
</evidence>
<evidence type="ECO:0000269" key="13">
    <source>
    </source>
</evidence>
<evidence type="ECO:0000269" key="14">
    <source>
    </source>
</evidence>
<evidence type="ECO:0000269" key="15">
    <source>
    </source>
</evidence>
<evidence type="ECO:0000269" key="16">
    <source>
    </source>
</evidence>
<evidence type="ECO:0000269" key="17">
    <source>
    </source>
</evidence>
<evidence type="ECO:0000269" key="18">
    <source>
    </source>
</evidence>
<evidence type="ECO:0000269" key="19">
    <source>
    </source>
</evidence>
<evidence type="ECO:0000269" key="20">
    <source>
    </source>
</evidence>
<evidence type="ECO:0000269" key="21">
    <source>
    </source>
</evidence>
<evidence type="ECO:0000269" key="22">
    <source>
    </source>
</evidence>
<evidence type="ECO:0000269" key="23">
    <source>
    </source>
</evidence>
<evidence type="ECO:0000303" key="24">
    <source>
    </source>
</evidence>
<evidence type="ECO:0000303" key="25">
    <source>
    </source>
</evidence>
<evidence type="ECO:0000303" key="26">
    <source ref="3"/>
</evidence>
<evidence type="ECO:0000305" key="27"/>
<evidence type="ECO:0000305" key="28">
    <source>
    </source>
</evidence>
<evidence type="ECO:0000305" key="29">
    <source ref="31"/>
</evidence>
<evidence type="ECO:0007744" key="30">
    <source>
        <dbReference type="PDB" id="3FB2"/>
    </source>
</evidence>
<evidence type="ECO:0007744" key="31">
    <source>
    </source>
</evidence>
<evidence type="ECO:0007744" key="32">
    <source>
    </source>
</evidence>
<evidence type="ECO:0007744" key="33">
    <source>
    </source>
</evidence>
<evidence type="ECO:0007744" key="34">
    <source>
    </source>
</evidence>
<evidence type="ECO:0007744" key="35">
    <source>
    </source>
</evidence>
<evidence type="ECO:0007744" key="36">
    <source>
    </source>
</evidence>
<evidence type="ECO:0007744" key="37">
    <source>
    </source>
</evidence>
<evidence type="ECO:0007744" key="38">
    <source>
    </source>
</evidence>
<evidence type="ECO:0007829" key="39">
    <source>
        <dbReference type="PDB" id="2FOT"/>
    </source>
</evidence>
<evidence type="ECO:0007829" key="40">
    <source>
        <dbReference type="PDB" id="3F31"/>
    </source>
</evidence>
<evidence type="ECO:0007829" key="41">
    <source>
        <dbReference type="PDB" id="3FB2"/>
    </source>
</evidence>
<evidence type="ECO:0007829" key="42">
    <source>
        <dbReference type="PDB" id="5FWB"/>
    </source>
</evidence>
<evidence type="ECO:0007829" key="43">
    <source>
        <dbReference type="PDB" id="5FWC"/>
    </source>
</evidence>